<organism>
    <name type="scientific">Escherichia coli (strain K12)</name>
    <dbReference type="NCBI Taxonomy" id="83333"/>
    <lineage>
        <taxon>Bacteria</taxon>
        <taxon>Pseudomonadati</taxon>
        <taxon>Pseudomonadota</taxon>
        <taxon>Gammaproteobacteria</taxon>
        <taxon>Enterobacterales</taxon>
        <taxon>Enterobacteriaceae</taxon>
        <taxon>Escherichia</taxon>
    </lineage>
</organism>
<evidence type="ECO:0000269" key="1">
    <source>
    </source>
</evidence>
<evidence type="ECO:0000269" key="2">
    <source>
    </source>
</evidence>
<evidence type="ECO:0000269" key="3">
    <source>
    </source>
</evidence>
<evidence type="ECO:0000269" key="4">
    <source>
    </source>
</evidence>
<evidence type="ECO:0000269" key="5">
    <source>
    </source>
</evidence>
<evidence type="ECO:0000269" key="6">
    <source>
    </source>
</evidence>
<evidence type="ECO:0000269" key="7">
    <source>
    </source>
</evidence>
<evidence type="ECO:0000269" key="8">
    <source>
    </source>
</evidence>
<evidence type="ECO:0000269" key="9">
    <source>
    </source>
</evidence>
<evidence type="ECO:0000269" key="10">
    <source>
    </source>
</evidence>
<evidence type="ECO:0000269" key="11">
    <source>
    </source>
</evidence>
<evidence type="ECO:0000269" key="12">
    <source>
    </source>
</evidence>
<evidence type="ECO:0000269" key="13">
    <source>
    </source>
</evidence>
<evidence type="ECO:0000269" key="14">
    <source>
    </source>
</evidence>
<evidence type="ECO:0000269" key="15">
    <source>
    </source>
</evidence>
<evidence type="ECO:0000269" key="16">
    <source>
    </source>
</evidence>
<evidence type="ECO:0000269" key="17">
    <source>
    </source>
</evidence>
<evidence type="ECO:0000303" key="18">
    <source>
    </source>
</evidence>
<evidence type="ECO:0000305" key="19"/>
<evidence type="ECO:0000312" key="20">
    <source>
        <dbReference type="PDB" id="7O19"/>
    </source>
</evidence>
<evidence type="ECO:0000312" key="21">
    <source>
        <dbReference type="PDB" id="7O1A"/>
    </source>
</evidence>
<evidence type="ECO:0000312" key="22">
    <source>
        <dbReference type="PDB" id="7O1C"/>
    </source>
</evidence>
<evidence type="ECO:0000312" key="23">
    <source>
        <dbReference type="PDB" id="7OIZ"/>
    </source>
</evidence>
<evidence type="ECO:0000312" key="24">
    <source>
        <dbReference type="PDB" id="7OJ0"/>
    </source>
</evidence>
<evidence type="ECO:0000312" key="25">
    <source>
        <dbReference type="PDB" id="7P3K"/>
    </source>
</evidence>
<evidence type="ECO:0007829" key="26">
    <source>
        <dbReference type="PDB" id="8CGK"/>
    </source>
</evidence>
<sequence>METIAKHRHARSSAQKVRLVADLIRGKKVSQALDILTYTNKKAAVLVKKVLESAIANAEHNDGADIDDLKVTKIFVDEGPSMKRIMPRAKGRADRILKRTSHITVVVSDR</sequence>
<proteinExistence type="evidence at protein level"/>
<accession>P61175</accession>
<accession>P02423</accession>
<accession>Q2M6Y0</accession>
<protein>
    <recommendedName>
        <fullName evidence="18">Large ribosomal subunit protein uL22</fullName>
    </recommendedName>
    <alternativeName>
        <fullName>50S ribosomal protein L22</fullName>
    </alternativeName>
</protein>
<gene>
    <name type="primary">rplV</name>
    <name type="synonym">eryB</name>
    <name type="ordered locus">b3315</name>
    <name type="ordered locus">JW3277</name>
</gene>
<keyword id="KW-0002">3D-structure</keyword>
<keyword id="KW-0046">Antibiotic resistance</keyword>
<keyword id="KW-0903">Direct protein sequencing</keyword>
<keyword id="KW-1185">Reference proteome</keyword>
<keyword id="KW-0687">Ribonucleoprotein</keyword>
<keyword id="KW-0689">Ribosomal protein</keyword>
<keyword id="KW-0694">RNA-binding</keyword>
<keyword id="KW-0699">rRNA-binding</keyword>
<name>RL22_ECOLI</name>
<feature type="chain" id="PRO_0000125153" description="Large ribosomal subunit protein uL22">
    <location>
        <begin position="1"/>
        <end position="110"/>
    </location>
</feature>
<feature type="binding site" evidence="12 13 20 21 22 23 24">
    <location>
        <position position="90"/>
    </location>
    <ligand>
        <name>L-tryptophan</name>
        <dbReference type="ChEBI" id="CHEBI:57912"/>
        <note>In TnaC-stalled ribosomes</note>
    </ligand>
</feature>
<feature type="sequence variant" description="In strain: SK1048; decreases translational rate, tRNA binding and subunit association at 44 degrees Celsius; does not alter 23S rRNA or uL4 interactions; not erythromycin resistant." evidence="15">
    <original>R</original>
    <variation>C</variation>
    <location>
        <position position="8"/>
    </location>
</feature>
<feature type="sequence variant" description="In strain: N281; confers erythromycin resistance; ribosomes bind erythromycin normally and have normal peptidyltransferase activity; 50S subunits assemble normally, even in the presence of drug; the protein is incorporated into ribosomes in vivo; abolishes translation elongation arrest of SecM." evidence="16 17">
    <location>
        <begin position="82"/>
        <end position="84"/>
    </location>
</feature>
<feature type="mutagenesis site" description="Incorporated into ribosomes in vivo, but is easily removed by a salt wash." evidence="5">
    <location>
        <begin position="82"/>
        <end position="99"/>
    </location>
</feature>
<feature type="mutagenesis site" description="Incorporates into ribosomes in vivo." evidence="5">
    <location>
        <begin position="85"/>
        <end position="95"/>
    </location>
</feature>
<feature type="mutagenesis site" description="Abolishes translation elongation arrest of SecM." evidence="3">
    <original>G</original>
    <variation>A</variation>
    <variation>D</variation>
    <variation>S</variation>
    <location>
        <position position="91"/>
    </location>
</feature>
<feature type="mutagenesis site" description="Abolishes translation elongation arrest of SecM." evidence="3">
    <original>A</original>
    <variation>S</variation>
    <variation>T</variation>
    <variation>V</variation>
    <location>
        <position position="93"/>
    </location>
</feature>
<feature type="strand" evidence="26">
    <location>
        <begin position="3"/>
        <end position="12"/>
    </location>
</feature>
<feature type="helix" evidence="26">
    <location>
        <begin position="14"/>
        <end position="24"/>
    </location>
</feature>
<feature type="helix" evidence="26">
    <location>
        <begin position="29"/>
        <end position="37"/>
    </location>
</feature>
<feature type="helix" evidence="26">
    <location>
        <begin position="42"/>
        <end position="62"/>
    </location>
</feature>
<feature type="helix" evidence="26">
    <location>
        <begin position="66"/>
        <end position="68"/>
    </location>
</feature>
<feature type="strand" evidence="26">
    <location>
        <begin position="70"/>
        <end position="78"/>
    </location>
</feature>
<feature type="strand" evidence="26">
    <location>
        <begin position="82"/>
        <end position="87"/>
    </location>
</feature>
<feature type="helix" evidence="26">
    <location>
        <begin position="89"/>
        <end position="91"/>
    </location>
</feature>
<feature type="strand" evidence="26">
    <location>
        <begin position="93"/>
        <end position="98"/>
    </location>
</feature>
<feature type="strand" evidence="26">
    <location>
        <begin position="101"/>
        <end position="108"/>
    </location>
</feature>
<dbReference type="EMBL" id="X02613">
    <property type="protein sequence ID" value="CAA26465.1"/>
    <property type="molecule type" value="Genomic_DNA"/>
</dbReference>
<dbReference type="EMBL" id="U18997">
    <property type="protein sequence ID" value="AAA58112.1"/>
    <property type="molecule type" value="Genomic_DNA"/>
</dbReference>
<dbReference type="EMBL" id="U00096">
    <property type="protein sequence ID" value="AAC76340.1"/>
    <property type="molecule type" value="Genomic_DNA"/>
</dbReference>
<dbReference type="EMBL" id="AP009048">
    <property type="protein sequence ID" value="BAE77976.1"/>
    <property type="molecule type" value="Genomic_DNA"/>
</dbReference>
<dbReference type="PIR" id="G23129">
    <property type="entry name" value="R5EC22"/>
</dbReference>
<dbReference type="RefSeq" id="NP_417774.1">
    <property type="nucleotide sequence ID" value="NC_000913.3"/>
</dbReference>
<dbReference type="RefSeq" id="WP_000447529.1">
    <property type="nucleotide sequence ID" value="NZ_STEB01000038.1"/>
</dbReference>
<dbReference type="PDB" id="2J28">
    <property type="method" value="EM"/>
    <property type="resolution" value="8.00 A"/>
    <property type="chains" value="S=1-110"/>
</dbReference>
<dbReference type="PDB" id="2RDO">
    <property type="method" value="EM"/>
    <property type="resolution" value="9.10 A"/>
    <property type="chains" value="S=1-110"/>
</dbReference>
<dbReference type="PDB" id="3BBX">
    <property type="method" value="EM"/>
    <property type="resolution" value="10.00 A"/>
    <property type="chains" value="S=1-110"/>
</dbReference>
<dbReference type="PDB" id="3J5L">
    <property type="method" value="EM"/>
    <property type="resolution" value="6.60 A"/>
    <property type="chains" value="S=1-110"/>
</dbReference>
<dbReference type="PDB" id="3J7Z">
    <property type="method" value="EM"/>
    <property type="resolution" value="3.90 A"/>
    <property type="chains" value="S=1-110"/>
</dbReference>
<dbReference type="PDB" id="3J8G">
    <property type="method" value="EM"/>
    <property type="resolution" value="5.00 A"/>
    <property type="chains" value="S=1-110"/>
</dbReference>
<dbReference type="PDB" id="3J9Y">
    <property type="method" value="EM"/>
    <property type="resolution" value="3.90 A"/>
    <property type="chains" value="S=1-110"/>
</dbReference>
<dbReference type="PDB" id="3J9Z">
    <property type="method" value="EM"/>
    <property type="resolution" value="3.60 A"/>
    <property type="chains" value="LQ=1-110"/>
</dbReference>
<dbReference type="PDB" id="3JA1">
    <property type="method" value="EM"/>
    <property type="resolution" value="3.60 A"/>
    <property type="chains" value="LU=1-110"/>
</dbReference>
<dbReference type="PDB" id="3JBU">
    <property type="method" value="EM"/>
    <property type="resolution" value="3.64 A"/>
    <property type="chains" value="s=1-110"/>
</dbReference>
<dbReference type="PDB" id="3JBV">
    <property type="method" value="EM"/>
    <property type="resolution" value="3.32 A"/>
    <property type="chains" value="s=1-110"/>
</dbReference>
<dbReference type="PDB" id="3JCD">
    <property type="method" value="EM"/>
    <property type="resolution" value="3.70 A"/>
    <property type="chains" value="S=1-110"/>
</dbReference>
<dbReference type="PDB" id="3JCE">
    <property type="method" value="EM"/>
    <property type="resolution" value="3.20 A"/>
    <property type="chains" value="S=1-110"/>
</dbReference>
<dbReference type="PDB" id="3JCJ">
    <property type="method" value="EM"/>
    <property type="resolution" value="3.70 A"/>
    <property type="chains" value="R=1-110"/>
</dbReference>
<dbReference type="PDB" id="3JCN">
    <property type="method" value="EM"/>
    <property type="resolution" value="4.60 A"/>
    <property type="chains" value="S=1-110"/>
</dbReference>
<dbReference type="PDB" id="4CSU">
    <property type="method" value="EM"/>
    <property type="resolution" value="5.50 A"/>
    <property type="chains" value="S=1-110"/>
</dbReference>
<dbReference type="PDB" id="4U1U">
    <property type="method" value="X-ray"/>
    <property type="resolution" value="2.95 A"/>
    <property type="chains" value="BS/DS=1-110"/>
</dbReference>
<dbReference type="PDB" id="4U1V">
    <property type="method" value="X-ray"/>
    <property type="resolution" value="3.00 A"/>
    <property type="chains" value="BS/DS=1-110"/>
</dbReference>
<dbReference type="PDB" id="4U20">
    <property type="method" value="X-ray"/>
    <property type="resolution" value="2.90 A"/>
    <property type="chains" value="BS/DS=1-110"/>
</dbReference>
<dbReference type="PDB" id="4U24">
    <property type="method" value="X-ray"/>
    <property type="resolution" value="2.90 A"/>
    <property type="chains" value="BS/DS=1-110"/>
</dbReference>
<dbReference type="PDB" id="4U25">
    <property type="method" value="X-ray"/>
    <property type="resolution" value="2.90 A"/>
    <property type="chains" value="BS/DS=1-110"/>
</dbReference>
<dbReference type="PDB" id="4U26">
    <property type="method" value="X-ray"/>
    <property type="resolution" value="2.80 A"/>
    <property type="chains" value="BS/DS=1-110"/>
</dbReference>
<dbReference type="PDB" id="4U27">
    <property type="method" value="X-ray"/>
    <property type="resolution" value="2.80 A"/>
    <property type="chains" value="BS/DS=1-110"/>
</dbReference>
<dbReference type="PDB" id="4UY8">
    <property type="method" value="EM"/>
    <property type="resolution" value="3.80 A"/>
    <property type="chains" value="S=1-110"/>
</dbReference>
<dbReference type="PDB" id="4V47">
    <property type="method" value="EM"/>
    <property type="resolution" value="12.30 A"/>
    <property type="chains" value="AQ=1-110"/>
</dbReference>
<dbReference type="PDB" id="4V48">
    <property type="method" value="EM"/>
    <property type="resolution" value="11.50 A"/>
    <property type="chains" value="AQ=1-110"/>
</dbReference>
<dbReference type="PDB" id="4V4H">
    <property type="method" value="X-ray"/>
    <property type="resolution" value="3.46 A"/>
    <property type="chains" value="BS/DS=1-110"/>
</dbReference>
<dbReference type="PDB" id="4V4Q">
    <property type="method" value="X-ray"/>
    <property type="resolution" value="3.46 A"/>
    <property type="chains" value="BS/DS=1-110"/>
</dbReference>
<dbReference type="PDB" id="4V4V">
    <property type="method" value="EM"/>
    <property type="resolution" value="15.00 A"/>
    <property type="chains" value="BQ=5-110"/>
</dbReference>
<dbReference type="PDB" id="4V4W">
    <property type="method" value="EM"/>
    <property type="resolution" value="15.00 A"/>
    <property type="chains" value="BQ=5-110"/>
</dbReference>
<dbReference type="PDB" id="4V50">
    <property type="method" value="X-ray"/>
    <property type="resolution" value="3.22 A"/>
    <property type="chains" value="BS/DS=1-110"/>
</dbReference>
<dbReference type="PDB" id="4V52">
    <property type="method" value="X-ray"/>
    <property type="resolution" value="3.21 A"/>
    <property type="chains" value="BS/DS=1-110"/>
</dbReference>
<dbReference type="PDB" id="4V53">
    <property type="method" value="X-ray"/>
    <property type="resolution" value="3.54 A"/>
    <property type="chains" value="BS/DS=1-110"/>
</dbReference>
<dbReference type="PDB" id="4V54">
    <property type="method" value="X-ray"/>
    <property type="resolution" value="3.30 A"/>
    <property type="chains" value="BS/DS=1-110"/>
</dbReference>
<dbReference type="PDB" id="4V55">
    <property type="method" value="X-ray"/>
    <property type="resolution" value="4.00 A"/>
    <property type="chains" value="BS/DS=1-110"/>
</dbReference>
<dbReference type="PDB" id="4V56">
    <property type="method" value="X-ray"/>
    <property type="resolution" value="3.93 A"/>
    <property type="chains" value="BS/DS=1-110"/>
</dbReference>
<dbReference type="PDB" id="4V57">
    <property type="method" value="X-ray"/>
    <property type="resolution" value="3.50 A"/>
    <property type="chains" value="BS/DS=1-110"/>
</dbReference>
<dbReference type="PDB" id="4V5B">
    <property type="method" value="X-ray"/>
    <property type="resolution" value="3.74 A"/>
    <property type="chains" value="AS/CS=1-110"/>
</dbReference>
<dbReference type="PDB" id="4V5H">
    <property type="method" value="EM"/>
    <property type="resolution" value="5.80 A"/>
    <property type="chains" value="BS=1-110"/>
</dbReference>
<dbReference type="PDB" id="4V5Y">
    <property type="method" value="X-ray"/>
    <property type="resolution" value="4.45 A"/>
    <property type="chains" value="BS/DS=1-110"/>
</dbReference>
<dbReference type="PDB" id="4V64">
    <property type="method" value="X-ray"/>
    <property type="resolution" value="3.50 A"/>
    <property type="chains" value="BS/DS=1-110"/>
</dbReference>
<dbReference type="PDB" id="4V65">
    <property type="method" value="EM"/>
    <property type="resolution" value="9.00 A"/>
    <property type="chains" value="BL=1-110"/>
</dbReference>
<dbReference type="PDB" id="4V66">
    <property type="method" value="EM"/>
    <property type="resolution" value="9.00 A"/>
    <property type="chains" value="BL=1-110"/>
</dbReference>
<dbReference type="PDB" id="4V69">
    <property type="method" value="EM"/>
    <property type="resolution" value="6.70 A"/>
    <property type="chains" value="BS=1-110"/>
</dbReference>
<dbReference type="PDB" id="4V6C">
    <property type="method" value="X-ray"/>
    <property type="resolution" value="3.19 A"/>
    <property type="chains" value="BS/DS=1-110"/>
</dbReference>
<dbReference type="PDB" id="4V6D">
    <property type="method" value="X-ray"/>
    <property type="resolution" value="3.81 A"/>
    <property type="chains" value="BS/DS=1-110"/>
</dbReference>
<dbReference type="PDB" id="4V6E">
    <property type="method" value="X-ray"/>
    <property type="resolution" value="3.71 A"/>
    <property type="chains" value="BS/DS=1-110"/>
</dbReference>
<dbReference type="PDB" id="4V6K">
    <property type="method" value="EM"/>
    <property type="resolution" value="8.25 A"/>
    <property type="chains" value="AT=1-110"/>
</dbReference>
<dbReference type="PDB" id="4V6L">
    <property type="method" value="EM"/>
    <property type="resolution" value="13.20 A"/>
    <property type="chains" value="BT=1-110"/>
</dbReference>
<dbReference type="PDB" id="4V6M">
    <property type="method" value="EM"/>
    <property type="resolution" value="7.10 A"/>
    <property type="chains" value="BS=1-110"/>
</dbReference>
<dbReference type="PDB" id="4V6N">
    <property type="method" value="EM"/>
    <property type="resolution" value="12.10 A"/>
    <property type="chains" value="AU=1-110"/>
</dbReference>
<dbReference type="PDB" id="4V6O">
    <property type="method" value="EM"/>
    <property type="resolution" value="14.70 A"/>
    <property type="chains" value="BU=1-110"/>
</dbReference>
<dbReference type="PDB" id="4V6P">
    <property type="method" value="EM"/>
    <property type="resolution" value="13.50 A"/>
    <property type="chains" value="BU=1-110"/>
</dbReference>
<dbReference type="PDB" id="4V6Q">
    <property type="method" value="EM"/>
    <property type="resolution" value="11.50 A"/>
    <property type="chains" value="BU=1-110"/>
</dbReference>
<dbReference type="PDB" id="4V6R">
    <property type="method" value="EM"/>
    <property type="resolution" value="11.50 A"/>
    <property type="chains" value="BU=1-110"/>
</dbReference>
<dbReference type="PDB" id="4V6S">
    <property type="method" value="EM"/>
    <property type="resolution" value="13.10 A"/>
    <property type="chains" value="AU=1-110"/>
</dbReference>
<dbReference type="PDB" id="4V6T">
    <property type="method" value="EM"/>
    <property type="resolution" value="8.30 A"/>
    <property type="chains" value="BS=1-110"/>
</dbReference>
<dbReference type="PDB" id="4V6V">
    <property type="method" value="EM"/>
    <property type="resolution" value="9.80 A"/>
    <property type="chains" value="BW=1-110"/>
</dbReference>
<dbReference type="PDB" id="4V6Y">
    <property type="method" value="EM"/>
    <property type="resolution" value="12.00 A"/>
    <property type="chains" value="BS=1-110"/>
</dbReference>
<dbReference type="PDB" id="4V6Z">
    <property type="method" value="EM"/>
    <property type="resolution" value="12.00 A"/>
    <property type="chains" value="BS=1-110"/>
</dbReference>
<dbReference type="PDB" id="4V70">
    <property type="method" value="EM"/>
    <property type="resolution" value="17.00 A"/>
    <property type="chains" value="BS=1-110"/>
</dbReference>
<dbReference type="PDB" id="4V71">
    <property type="method" value="EM"/>
    <property type="resolution" value="20.00 A"/>
    <property type="chains" value="BS=1-110"/>
</dbReference>
<dbReference type="PDB" id="4V72">
    <property type="method" value="EM"/>
    <property type="resolution" value="13.00 A"/>
    <property type="chains" value="BS=1-110"/>
</dbReference>
<dbReference type="PDB" id="4V73">
    <property type="method" value="EM"/>
    <property type="resolution" value="15.00 A"/>
    <property type="chains" value="BS=1-110"/>
</dbReference>
<dbReference type="PDB" id="4V74">
    <property type="method" value="EM"/>
    <property type="resolution" value="17.00 A"/>
    <property type="chains" value="BS=1-110"/>
</dbReference>
<dbReference type="PDB" id="4V75">
    <property type="method" value="EM"/>
    <property type="resolution" value="12.00 A"/>
    <property type="chains" value="BS=1-110"/>
</dbReference>
<dbReference type="PDB" id="4V76">
    <property type="method" value="EM"/>
    <property type="resolution" value="17.00 A"/>
    <property type="chains" value="BS=1-110"/>
</dbReference>
<dbReference type="PDB" id="4V77">
    <property type="method" value="EM"/>
    <property type="resolution" value="17.00 A"/>
    <property type="chains" value="BS=1-110"/>
</dbReference>
<dbReference type="PDB" id="4V78">
    <property type="method" value="EM"/>
    <property type="resolution" value="20.00 A"/>
    <property type="chains" value="BS=1-110"/>
</dbReference>
<dbReference type="PDB" id="4V79">
    <property type="method" value="EM"/>
    <property type="resolution" value="15.00 A"/>
    <property type="chains" value="BS=1-110"/>
</dbReference>
<dbReference type="PDB" id="4V7A">
    <property type="method" value="EM"/>
    <property type="resolution" value="9.00 A"/>
    <property type="chains" value="BS=1-110"/>
</dbReference>
<dbReference type="PDB" id="4V7B">
    <property type="method" value="EM"/>
    <property type="resolution" value="6.80 A"/>
    <property type="chains" value="BS=1-110"/>
</dbReference>
<dbReference type="PDB" id="4V7C">
    <property type="method" value="EM"/>
    <property type="resolution" value="7.60 A"/>
    <property type="chains" value="BU=1-110"/>
</dbReference>
<dbReference type="PDB" id="4V7D">
    <property type="method" value="EM"/>
    <property type="resolution" value="7.60 A"/>
    <property type="chains" value="AV=1-110"/>
</dbReference>
<dbReference type="PDB" id="4V7I">
    <property type="method" value="EM"/>
    <property type="resolution" value="9.60 A"/>
    <property type="chains" value="AS=1-110"/>
</dbReference>
<dbReference type="PDB" id="4V7S">
    <property type="method" value="X-ray"/>
    <property type="resolution" value="3.25 A"/>
    <property type="chains" value="BS/DS=1-110"/>
</dbReference>
<dbReference type="PDB" id="4V7T">
    <property type="method" value="X-ray"/>
    <property type="resolution" value="3.19 A"/>
    <property type="chains" value="BS/DS=1-110"/>
</dbReference>
<dbReference type="PDB" id="4V7U">
    <property type="method" value="X-ray"/>
    <property type="resolution" value="3.10 A"/>
    <property type="chains" value="BS/DS=1-110"/>
</dbReference>
<dbReference type="PDB" id="4V7V">
    <property type="method" value="X-ray"/>
    <property type="resolution" value="3.29 A"/>
    <property type="chains" value="BS/DS=1-110"/>
</dbReference>
<dbReference type="PDB" id="4V85">
    <property type="method" value="X-ray"/>
    <property type="resolution" value="3.20 A"/>
    <property type="chains" value="BW=1-110"/>
</dbReference>
<dbReference type="PDB" id="4V89">
    <property type="method" value="X-ray"/>
    <property type="resolution" value="3.70 A"/>
    <property type="chains" value="BW=1-110"/>
</dbReference>
<dbReference type="PDB" id="4V9C">
    <property type="method" value="X-ray"/>
    <property type="resolution" value="3.30 A"/>
    <property type="chains" value="BS/DS=1-110"/>
</dbReference>
<dbReference type="PDB" id="4V9D">
    <property type="method" value="X-ray"/>
    <property type="resolution" value="3.00 A"/>
    <property type="chains" value="CS/DS=1-110"/>
</dbReference>
<dbReference type="PDB" id="4V9O">
    <property type="method" value="X-ray"/>
    <property type="resolution" value="2.90 A"/>
    <property type="chains" value="AS/CS/ES/GS=1-110"/>
</dbReference>
<dbReference type="PDB" id="4V9P">
    <property type="method" value="X-ray"/>
    <property type="resolution" value="2.90 A"/>
    <property type="chains" value="AS/CS/ES/GS=1-110"/>
</dbReference>
<dbReference type="PDB" id="4WF1">
    <property type="method" value="X-ray"/>
    <property type="resolution" value="3.09 A"/>
    <property type="chains" value="BS/DS=1-110"/>
</dbReference>
<dbReference type="PDB" id="4WOI">
    <property type="method" value="X-ray"/>
    <property type="resolution" value="3.00 A"/>
    <property type="chains" value="BS/CS=1-110"/>
</dbReference>
<dbReference type="PDB" id="4WWW">
    <property type="method" value="X-ray"/>
    <property type="resolution" value="3.10 A"/>
    <property type="chains" value="RS/YS=1-110"/>
</dbReference>
<dbReference type="PDB" id="4YBB">
    <property type="method" value="X-ray"/>
    <property type="resolution" value="2.10 A"/>
    <property type="chains" value="CT/DT=1-110"/>
</dbReference>
<dbReference type="PDB" id="5ADY">
    <property type="method" value="EM"/>
    <property type="resolution" value="4.50 A"/>
    <property type="chains" value="S=1-110"/>
</dbReference>
<dbReference type="PDB" id="5AFI">
    <property type="method" value="EM"/>
    <property type="resolution" value="2.90 A"/>
    <property type="chains" value="S=1-110"/>
</dbReference>
<dbReference type="PDB" id="5AKA">
    <property type="method" value="EM"/>
    <property type="resolution" value="5.70 A"/>
    <property type="chains" value="S=1-110"/>
</dbReference>
<dbReference type="PDB" id="5GAD">
    <property type="method" value="EM"/>
    <property type="resolution" value="3.70 A"/>
    <property type="chains" value="T=1-110"/>
</dbReference>
<dbReference type="PDB" id="5GAE">
    <property type="method" value="EM"/>
    <property type="resolution" value="3.33 A"/>
    <property type="chains" value="T=1-110"/>
</dbReference>
<dbReference type="PDB" id="5GAF">
    <property type="method" value="EM"/>
    <property type="resolution" value="4.30 A"/>
    <property type="chains" value="T=1-110"/>
</dbReference>
<dbReference type="PDB" id="5GAG">
    <property type="method" value="EM"/>
    <property type="resolution" value="3.80 A"/>
    <property type="chains" value="T=1-110"/>
</dbReference>
<dbReference type="PDB" id="5GAH">
    <property type="method" value="EM"/>
    <property type="resolution" value="3.80 A"/>
    <property type="chains" value="T=1-110"/>
</dbReference>
<dbReference type="PDB" id="5H5U">
    <property type="method" value="EM"/>
    <property type="resolution" value="3.00 A"/>
    <property type="chains" value="T=1-110"/>
</dbReference>
<dbReference type="PDB" id="5IQR">
    <property type="method" value="EM"/>
    <property type="resolution" value="3.00 A"/>
    <property type="chains" value="S=1-110"/>
</dbReference>
<dbReference type="PDB" id="5IT8">
    <property type="method" value="X-ray"/>
    <property type="resolution" value="3.12 A"/>
    <property type="chains" value="CT/DT=1-110"/>
</dbReference>
<dbReference type="PDB" id="5J5B">
    <property type="method" value="X-ray"/>
    <property type="resolution" value="2.80 A"/>
    <property type="chains" value="CT/DT=1-110"/>
</dbReference>
<dbReference type="PDB" id="5J7L">
    <property type="method" value="X-ray"/>
    <property type="resolution" value="3.00 A"/>
    <property type="chains" value="CT/DT=1-110"/>
</dbReference>
<dbReference type="PDB" id="5J88">
    <property type="method" value="X-ray"/>
    <property type="resolution" value="3.32 A"/>
    <property type="chains" value="CT/DT=1-110"/>
</dbReference>
<dbReference type="PDB" id="5J8A">
    <property type="method" value="X-ray"/>
    <property type="resolution" value="3.10 A"/>
    <property type="chains" value="CT/DT=1-110"/>
</dbReference>
<dbReference type="PDB" id="5J91">
    <property type="method" value="X-ray"/>
    <property type="resolution" value="2.96 A"/>
    <property type="chains" value="CT/DT=1-110"/>
</dbReference>
<dbReference type="PDB" id="5JC9">
    <property type="method" value="X-ray"/>
    <property type="resolution" value="3.03 A"/>
    <property type="chains" value="CT/DT=1-110"/>
</dbReference>
<dbReference type="PDB" id="5JTE">
    <property type="method" value="EM"/>
    <property type="resolution" value="3.60 A"/>
    <property type="chains" value="BS=1-110"/>
</dbReference>
<dbReference type="PDB" id="5JU8">
    <property type="method" value="EM"/>
    <property type="resolution" value="3.60 A"/>
    <property type="chains" value="BS=1-110"/>
</dbReference>
<dbReference type="PDB" id="5KCR">
    <property type="method" value="EM"/>
    <property type="resolution" value="3.60 A"/>
    <property type="chains" value="1W=1-110"/>
</dbReference>
<dbReference type="PDB" id="5KCS">
    <property type="method" value="EM"/>
    <property type="resolution" value="3.90 A"/>
    <property type="chains" value="1W=1-110"/>
</dbReference>
<dbReference type="PDB" id="5KPS">
    <property type="method" value="EM"/>
    <property type="resolution" value="3.90 A"/>
    <property type="chains" value="S=1-110"/>
</dbReference>
<dbReference type="PDB" id="5KPV">
    <property type="method" value="EM"/>
    <property type="resolution" value="4.10 A"/>
    <property type="chains" value="R=1-110"/>
</dbReference>
<dbReference type="PDB" id="5KPW">
    <property type="method" value="EM"/>
    <property type="resolution" value="3.90 A"/>
    <property type="chains" value="R=1-110"/>
</dbReference>
<dbReference type="PDB" id="5KPX">
    <property type="method" value="EM"/>
    <property type="resolution" value="3.90 A"/>
    <property type="chains" value="R=1-110"/>
</dbReference>
<dbReference type="PDB" id="5L3P">
    <property type="method" value="EM"/>
    <property type="resolution" value="3.70 A"/>
    <property type="chains" value="W=1-110"/>
</dbReference>
<dbReference type="PDB" id="5LZA">
    <property type="method" value="EM"/>
    <property type="resolution" value="3.60 A"/>
    <property type="chains" value="S=1-110"/>
</dbReference>
<dbReference type="PDB" id="5LZB">
    <property type="method" value="EM"/>
    <property type="resolution" value="5.30 A"/>
    <property type="chains" value="S=1-110"/>
</dbReference>
<dbReference type="PDB" id="5LZC">
    <property type="method" value="EM"/>
    <property type="resolution" value="4.80 A"/>
    <property type="chains" value="S=1-110"/>
</dbReference>
<dbReference type="PDB" id="5LZD">
    <property type="method" value="EM"/>
    <property type="resolution" value="3.40 A"/>
    <property type="chains" value="S=1-110"/>
</dbReference>
<dbReference type="PDB" id="5LZE">
    <property type="method" value="EM"/>
    <property type="resolution" value="3.50 A"/>
    <property type="chains" value="S=1-110"/>
</dbReference>
<dbReference type="PDB" id="5LZF">
    <property type="method" value="EM"/>
    <property type="resolution" value="4.60 A"/>
    <property type="chains" value="S=1-110"/>
</dbReference>
<dbReference type="PDB" id="5MDV">
    <property type="method" value="EM"/>
    <property type="resolution" value="2.97 A"/>
    <property type="chains" value="S=1-110"/>
</dbReference>
<dbReference type="PDB" id="5MDW">
    <property type="method" value="EM"/>
    <property type="resolution" value="3.06 A"/>
    <property type="chains" value="S=1-110"/>
</dbReference>
<dbReference type="PDB" id="5MDY">
    <property type="method" value="EM"/>
    <property type="resolution" value="3.35 A"/>
    <property type="chains" value="S=1-110"/>
</dbReference>
<dbReference type="PDB" id="5MDZ">
    <property type="method" value="EM"/>
    <property type="resolution" value="3.10 A"/>
    <property type="chains" value="S=1-110"/>
</dbReference>
<dbReference type="PDB" id="5MGP">
    <property type="method" value="EM"/>
    <property type="resolution" value="3.10 A"/>
    <property type="chains" value="S=1-110"/>
</dbReference>
<dbReference type="PDB" id="5NCO">
    <property type="method" value="EM"/>
    <property type="resolution" value="4.80 A"/>
    <property type="chains" value="T=1-110"/>
</dbReference>
<dbReference type="PDB" id="5NP6">
    <property type="method" value="EM"/>
    <property type="resolution" value="3.60 A"/>
    <property type="chains" value="q=1-110"/>
</dbReference>
<dbReference type="PDB" id="5NWY">
    <property type="method" value="EM"/>
    <property type="resolution" value="2.93 A"/>
    <property type="chains" value="f=1-110"/>
</dbReference>
<dbReference type="PDB" id="5O2R">
    <property type="method" value="EM"/>
    <property type="resolution" value="3.40 A"/>
    <property type="chains" value="S=1-110"/>
</dbReference>
<dbReference type="PDB" id="5U4I">
    <property type="method" value="EM"/>
    <property type="resolution" value="3.50 A"/>
    <property type="chains" value="T=1-110"/>
</dbReference>
<dbReference type="PDB" id="5U9F">
    <property type="method" value="EM"/>
    <property type="resolution" value="3.20 A"/>
    <property type="chains" value="21=1-110"/>
</dbReference>
<dbReference type="PDB" id="5U9G">
    <property type="method" value="EM"/>
    <property type="resolution" value="3.20 A"/>
    <property type="chains" value="21=1-110"/>
</dbReference>
<dbReference type="PDB" id="5UYK">
    <property type="method" value="EM"/>
    <property type="resolution" value="3.90 A"/>
    <property type="chains" value="21=1-110"/>
</dbReference>
<dbReference type="PDB" id="5UYL">
    <property type="method" value="EM"/>
    <property type="resolution" value="3.60 A"/>
    <property type="chains" value="21=1-110"/>
</dbReference>
<dbReference type="PDB" id="5UYM">
    <property type="method" value="EM"/>
    <property type="resolution" value="3.20 A"/>
    <property type="chains" value="21=1-110"/>
</dbReference>
<dbReference type="PDB" id="5UYN">
    <property type="method" value="EM"/>
    <property type="resolution" value="4.00 A"/>
    <property type="chains" value="21=1-110"/>
</dbReference>
<dbReference type="PDB" id="5UYP">
    <property type="method" value="EM"/>
    <property type="resolution" value="3.90 A"/>
    <property type="chains" value="21=1-110"/>
</dbReference>
<dbReference type="PDB" id="5UYQ">
    <property type="method" value="EM"/>
    <property type="resolution" value="3.80 A"/>
    <property type="chains" value="21=1-110"/>
</dbReference>
<dbReference type="PDB" id="5WDT">
    <property type="method" value="EM"/>
    <property type="resolution" value="3.00 A"/>
    <property type="chains" value="S=1-109"/>
</dbReference>
<dbReference type="PDB" id="5WE4">
    <property type="method" value="EM"/>
    <property type="resolution" value="3.10 A"/>
    <property type="chains" value="S=1-109"/>
</dbReference>
<dbReference type="PDB" id="5WE6">
    <property type="method" value="EM"/>
    <property type="resolution" value="3.40 A"/>
    <property type="chains" value="S=1-109"/>
</dbReference>
<dbReference type="PDB" id="5WF0">
    <property type="method" value="EM"/>
    <property type="resolution" value="3.60 A"/>
    <property type="chains" value="S=1-109"/>
</dbReference>
<dbReference type="PDB" id="5WFK">
    <property type="method" value="EM"/>
    <property type="resolution" value="3.40 A"/>
    <property type="chains" value="S=1-109"/>
</dbReference>
<dbReference type="PDB" id="5WFS">
    <property type="method" value="EM"/>
    <property type="resolution" value="3.00 A"/>
    <property type="chains" value="S=1-109"/>
</dbReference>
<dbReference type="PDB" id="6BU8">
    <property type="method" value="EM"/>
    <property type="resolution" value="3.50 A"/>
    <property type="chains" value="21=1-110"/>
</dbReference>
<dbReference type="PDB" id="6BY1">
    <property type="method" value="X-ray"/>
    <property type="resolution" value="3.94 A"/>
    <property type="chains" value="CS/DS=1-110"/>
</dbReference>
<dbReference type="PDB" id="6C4I">
    <property type="method" value="EM"/>
    <property type="resolution" value="3.24 A"/>
    <property type="chains" value="T=1-110"/>
</dbReference>
<dbReference type="PDB" id="6DNC">
    <property type="method" value="EM"/>
    <property type="resolution" value="3.70 A"/>
    <property type="chains" value="W=1-110"/>
</dbReference>
<dbReference type="PDB" id="6ENF">
    <property type="method" value="EM"/>
    <property type="resolution" value="3.20 A"/>
    <property type="chains" value="S=1-110"/>
</dbReference>
<dbReference type="PDB" id="6ENJ">
    <property type="method" value="EM"/>
    <property type="resolution" value="3.70 A"/>
    <property type="chains" value="S=1-110"/>
</dbReference>
<dbReference type="PDB" id="6ENU">
    <property type="method" value="EM"/>
    <property type="resolution" value="3.10 A"/>
    <property type="chains" value="S=1-110"/>
</dbReference>
<dbReference type="PDB" id="6GBZ">
    <property type="method" value="EM"/>
    <property type="resolution" value="3.80 A"/>
    <property type="chains" value="S=1-110"/>
</dbReference>
<dbReference type="PDB" id="6GC0">
    <property type="method" value="EM"/>
    <property type="resolution" value="3.80 A"/>
    <property type="chains" value="S=1-110"/>
</dbReference>
<dbReference type="PDB" id="6GC4">
    <property type="method" value="EM"/>
    <property type="resolution" value="4.30 A"/>
    <property type="chains" value="S=1-110"/>
</dbReference>
<dbReference type="PDB" id="6GC6">
    <property type="method" value="EM"/>
    <property type="resolution" value="4.30 A"/>
    <property type="chains" value="S=1-110"/>
</dbReference>
<dbReference type="PDB" id="6GC7">
    <property type="method" value="EM"/>
    <property type="resolution" value="4.30 A"/>
    <property type="chains" value="S=1-110"/>
</dbReference>
<dbReference type="PDB" id="6GC8">
    <property type="method" value="EM"/>
    <property type="resolution" value="3.80 A"/>
    <property type="chains" value="S=1-110"/>
</dbReference>
<dbReference type="PDB" id="6GWT">
    <property type="method" value="EM"/>
    <property type="resolution" value="3.80 A"/>
    <property type="chains" value="S=1-110"/>
</dbReference>
<dbReference type="PDB" id="6GXM">
    <property type="method" value="EM"/>
    <property type="resolution" value="3.80 A"/>
    <property type="chains" value="S=1-110"/>
</dbReference>
<dbReference type="PDB" id="6GXN">
    <property type="method" value="EM"/>
    <property type="resolution" value="3.90 A"/>
    <property type="chains" value="S=1-110"/>
</dbReference>
<dbReference type="PDB" id="6GXO">
    <property type="method" value="EM"/>
    <property type="resolution" value="3.90 A"/>
    <property type="chains" value="S=1-110"/>
</dbReference>
<dbReference type="PDB" id="6GXP">
    <property type="method" value="EM"/>
    <property type="resolution" value="4.40 A"/>
    <property type="chains" value="S=1-110"/>
</dbReference>
<dbReference type="PDB" id="6H4N">
    <property type="method" value="EM"/>
    <property type="resolution" value="3.00 A"/>
    <property type="chains" value="S=1-110"/>
</dbReference>
<dbReference type="PDB" id="6H58">
    <property type="method" value="EM"/>
    <property type="resolution" value="7.90 A"/>
    <property type="chains" value="S/SS=1-110"/>
</dbReference>
<dbReference type="PDB" id="6HRM">
    <property type="method" value="EM"/>
    <property type="resolution" value="2.96 A"/>
    <property type="chains" value="S=1-110"/>
</dbReference>
<dbReference type="PDB" id="6I0Y">
    <property type="method" value="EM"/>
    <property type="resolution" value="3.20 A"/>
    <property type="chains" value="S=1-110"/>
</dbReference>
<dbReference type="PDB" id="6I7V">
    <property type="method" value="X-ray"/>
    <property type="resolution" value="2.90 A"/>
    <property type="chains" value="CT/DT=1-110"/>
</dbReference>
<dbReference type="PDB" id="6O9J">
    <property type="method" value="EM"/>
    <property type="resolution" value="3.90 A"/>
    <property type="chains" value="S=1-110"/>
</dbReference>
<dbReference type="PDB" id="6O9K">
    <property type="method" value="EM"/>
    <property type="resolution" value="4.00 A"/>
    <property type="chains" value="S=1-110"/>
</dbReference>
<dbReference type="PDB" id="6OFX">
    <property type="method" value="EM"/>
    <property type="resolution" value="3.30 A"/>
    <property type="chains" value="s=1-110"/>
</dbReference>
<dbReference type="PDB" id="6OG7">
    <property type="method" value="EM"/>
    <property type="resolution" value="3.30 A"/>
    <property type="chains" value="s=1-110"/>
</dbReference>
<dbReference type="PDB" id="6OGF">
    <property type="method" value="EM"/>
    <property type="resolution" value="3.90 A"/>
    <property type="chains" value="s=1-110"/>
</dbReference>
<dbReference type="PDB" id="6OGG">
    <property type="method" value="EM"/>
    <property type="resolution" value="4.20 A"/>
    <property type="chains" value="s=1-110"/>
</dbReference>
<dbReference type="PDB" id="6OGI">
    <property type="method" value="EM"/>
    <property type="resolution" value="3.40 A"/>
    <property type="chains" value="s=1-110"/>
</dbReference>
<dbReference type="PDB" id="6OM6">
    <property type="method" value="EM"/>
    <property type="resolution" value="3.10 A"/>
    <property type="chains" value="S=1-110"/>
</dbReference>
<dbReference type="PDB" id="6ORE">
    <property type="method" value="EM"/>
    <property type="resolution" value="2.90 A"/>
    <property type="chains" value="S=1-110"/>
</dbReference>
<dbReference type="PDB" id="6ORL">
    <property type="method" value="EM"/>
    <property type="resolution" value="3.50 A"/>
    <property type="chains" value="S=1-110"/>
</dbReference>
<dbReference type="PDB" id="6OSK">
    <property type="method" value="EM"/>
    <property type="resolution" value="3.60 A"/>
    <property type="chains" value="S=1-110"/>
</dbReference>
<dbReference type="PDB" id="6OSQ">
    <property type="method" value="EM"/>
    <property type="resolution" value="3.50 A"/>
    <property type="chains" value="S=1-110"/>
</dbReference>
<dbReference type="PDB" id="6OST">
    <property type="method" value="EM"/>
    <property type="resolution" value="4.20 A"/>
    <property type="chains" value="S=1-110"/>
</dbReference>
<dbReference type="PDB" id="6OT3">
    <property type="method" value="EM"/>
    <property type="resolution" value="3.90 A"/>
    <property type="chains" value="S=1-110"/>
</dbReference>
<dbReference type="PDB" id="6OUO">
    <property type="method" value="EM"/>
    <property type="resolution" value="3.70 A"/>
    <property type="chains" value="S=1-110"/>
</dbReference>
<dbReference type="PDB" id="6PJ6">
    <property type="method" value="EM"/>
    <property type="resolution" value="2.20 A"/>
    <property type="chains" value="a=1-110"/>
</dbReference>
<dbReference type="PDB" id="6Q98">
    <property type="method" value="EM"/>
    <property type="resolution" value="4.30 A"/>
    <property type="chains" value="S=1-110"/>
</dbReference>
<dbReference type="PDB" id="6Q9A">
    <property type="method" value="EM"/>
    <property type="resolution" value="3.70 A"/>
    <property type="chains" value="S=1-109"/>
</dbReference>
<dbReference type="PDB" id="6QDW">
    <property type="method" value="EM"/>
    <property type="resolution" value="2.83 A"/>
    <property type="chains" value="s=1-110"/>
</dbReference>
<dbReference type="PDB" id="6QUL">
    <property type="method" value="EM"/>
    <property type="resolution" value="3.00 A"/>
    <property type="chains" value="T=1-110"/>
</dbReference>
<dbReference type="PDB" id="6S0K">
    <property type="method" value="EM"/>
    <property type="resolution" value="3.10 A"/>
    <property type="chains" value="T=1-110"/>
</dbReference>
<dbReference type="PDB" id="6SZS">
    <property type="method" value="EM"/>
    <property type="resolution" value="3.06 A"/>
    <property type="chains" value="S=1-110"/>
</dbReference>
<dbReference type="PDB" id="6TBV">
    <property type="method" value="EM"/>
    <property type="resolution" value="2.70 A"/>
    <property type="chains" value="L221=1-110"/>
</dbReference>
<dbReference type="PDB" id="6TC3">
    <property type="method" value="EM"/>
    <property type="resolution" value="2.70 A"/>
    <property type="chains" value="L221=1-110"/>
</dbReference>
<dbReference type="PDB" id="6U48">
    <property type="method" value="EM"/>
    <property type="resolution" value="2.87 A"/>
    <property type="chains" value="CT=1-110"/>
</dbReference>
<dbReference type="PDB" id="6VU3">
    <property type="method" value="EM"/>
    <property type="resolution" value="3.70 A"/>
    <property type="chains" value="1=1-110"/>
</dbReference>
<dbReference type="PDB" id="6VWL">
    <property type="method" value="EM"/>
    <property type="resolution" value="3.10 A"/>
    <property type="chains" value="Q=1-110"/>
</dbReference>
<dbReference type="PDB" id="6VWM">
    <property type="method" value="EM"/>
    <property type="resolution" value="3.40 A"/>
    <property type="chains" value="Q=1-110"/>
</dbReference>
<dbReference type="PDB" id="6VWN">
    <property type="method" value="EM"/>
    <property type="resolution" value="3.40 A"/>
    <property type="chains" value="Q=1-110"/>
</dbReference>
<dbReference type="PDB" id="6VYQ">
    <property type="method" value="EM"/>
    <property type="resolution" value="3.70 A"/>
    <property type="chains" value="1=1-110"/>
</dbReference>
<dbReference type="PDB" id="6VYR">
    <property type="method" value="EM"/>
    <property type="resolution" value="3.80 A"/>
    <property type="chains" value="1=1-110"/>
</dbReference>
<dbReference type="PDB" id="6VYS">
    <property type="method" value="EM"/>
    <property type="resolution" value="3.70 A"/>
    <property type="chains" value="1=1-110"/>
</dbReference>
<dbReference type="PDB" id="6VYT">
    <property type="method" value="EM"/>
    <property type="resolution" value="14.00 A"/>
    <property type="chains" value="1=1-110"/>
</dbReference>
<dbReference type="PDB" id="6VYU">
    <property type="method" value="EM"/>
    <property type="resolution" value="7.00 A"/>
    <property type="chains" value="1=1-110"/>
</dbReference>
<dbReference type="PDB" id="6VYW">
    <property type="method" value="EM"/>
    <property type="resolution" value="7.00 A"/>
    <property type="chains" value="1=1-110"/>
</dbReference>
<dbReference type="PDB" id="6VYX">
    <property type="method" value="EM"/>
    <property type="resolution" value="9.90 A"/>
    <property type="chains" value="1=1-110"/>
</dbReference>
<dbReference type="PDB" id="6VYY">
    <property type="method" value="EM"/>
    <property type="resolution" value="9.90 A"/>
    <property type="chains" value="1=1-110"/>
</dbReference>
<dbReference type="PDB" id="6VYZ">
    <property type="method" value="EM"/>
    <property type="resolution" value="9.90 A"/>
    <property type="chains" value="1=1-110"/>
</dbReference>
<dbReference type="PDB" id="6VZ2">
    <property type="method" value="EM"/>
    <property type="resolution" value="10.00 A"/>
    <property type="chains" value="1=1-110"/>
</dbReference>
<dbReference type="PDB" id="6VZ3">
    <property type="method" value="EM"/>
    <property type="resolution" value="8.90 A"/>
    <property type="chains" value="1=1-110"/>
</dbReference>
<dbReference type="PDB" id="6VZ5">
    <property type="method" value="EM"/>
    <property type="resolution" value="8.90 A"/>
    <property type="chains" value="1=1-110"/>
</dbReference>
<dbReference type="PDB" id="6VZ7">
    <property type="method" value="EM"/>
    <property type="resolution" value="7.00 A"/>
    <property type="chains" value="1=1-110"/>
</dbReference>
<dbReference type="PDB" id="6VZJ">
    <property type="method" value="EM"/>
    <property type="resolution" value="4.10 A"/>
    <property type="chains" value="1=1-110"/>
</dbReference>
<dbReference type="PDB" id="6WD0">
    <property type="method" value="EM"/>
    <property type="resolution" value="3.00 A"/>
    <property type="chains" value="s=1-110"/>
</dbReference>
<dbReference type="PDB" id="6WD1">
    <property type="method" value="EM"/>
    <property type="resolution" value="3.30 A"/>
    <property type="chains" value="s=1-110"/>
</dbReference>
<dbReference type="PDB" id="6WD2">
    <property type="method" value="EM"/>
    <property type="resolution" value="3.60 A"/>
    <property type="chains" value="s=1-110"/>
</dbReference>
<dbReference type="PDB" id="6WD3">
    <property type="method" value="EM"/>
    <property type="resolution" value="3.60 A"/>
    <property type="chains" value="s=1-110"/>
</dbReference>
<dbReference type="PDB" id="6WD4">
    <property type="method" value="EM"/>
    <property type="resolution" value="3.70 A"/>
    <property type="chains" value="s=1-110"/>
</dbReference>
<dbReference type="PDB" id="6WD5">
    <property type="method" value="EM"/>
    <property type="resolution" value="3.60 A"/>
    <property type="chains" value="s=1-110"/>
</dbReference>
<dbReference type="PDB" id="6WD6">
    <property type="method" value="EM"/>
    <property type="resolution" value="3.70 A"/>
    <property type="chains" value="s=1-110"/>
</dbReference>
<dbReference type="PDB" id="6WD7">
    <property type="method" value="EM"/>
    <property type="resolution" value="3.90 A"/>
    <property type="chains" value="s=1-110"/>
</dbReference>
<dbReference type="PDB" id="6WD8">
    <property type="method" value="EM"/>
    <property type="resolution" value="3.70 A"/>
    <property type="chains" value="s=1-110"/>
</dbReference>
<dbReference type="PDB" id="6WD9">
    <property type="method" value="EM"/>
    <property type="resolution" value="3.70 A"/>
    <property type="chains" value="s=1-110"/>
</dbReference>
<dbReference type="PDB" id="6WDA">
    <property type="method" value="EM"/>
    <property type="resolution" value="3.80 A"/>
    <property type="chains" value="s=1-110"/>
</dbReference>
<dbReference type="PDB" id="6WDB">
    <property type="method" value="EM"/>
    <property type="resolution" value="4.00 A"/>
    <property type="chains" value="s=1-110"/>
</dbReference>
<dbReference type="PDB" id="6WDC">
    <property type="method" value="EM"/>
    <property type="resolution" value="4.20 A"/>
    <property type="chains" value="s=1-110"/>
</dbReference>
<dbReference type="PDB" id="6WDD">
    <property type="method" value="EM"/>
    <property type="resolution" value="3.20 A"/>
    <property type="chains" value="s=1-110"/>
</dbReference>
<dbReference type="PDB" id="6WDE">
    <property type="method" value="EM"/>
    <property type="resolution" value="3.00 A"/>
    <property type="chains" value="s=1-110"/>
</dbReference>
<dbReference type="PDB" id="6WDF">
    <property type="method" value="EM"/>
    <property type="resolution" value="3.30 A"/>
    <property type="chains" value="s=1-110"/>
</dbReference>
<dbReference type="PDB" id="6WDG">
    <property type="method" value="EM"/>
    <property type="resolution" value="3.30 A"/>
    <property type="chains" value="s=1-110"/>
</dbReference>
<dbReference type="PDB" id="6WDH">
    <property type="method" value="EM"/>
    <property type="resolution" value="4.30 A"/>
    <property type="chains" value="s=1-110"/>
</dbReference>
<dbReference type="PDB" id="6WDI">
    <property type="method" value="EM"/>
    <property type="resolution" value="4.00 A"/>
    <property type="chains" value="s=1-110"/>
</dbReference>
<dbReference type="PDB" id="6WDJ">
    <property type="method" value="EM"/>
    <property type="resolution" value="3.70 A"/>
    <property type="chains" value="s=1-110"/>
</dbReference>
<dbReference type="PDB" id="6WDK">
    <property type="method" value="EM"/>
    <property type="resolution" value="3.60 A"/>
    <property type="chains" value="s=1-110"/>
</dbReference>
<dbReference type="PDB" id="6WDL">
    <property type="method" value="EM"/>
    <property type="resolution" value="3.70 A"/>
    <property type="chains" value="s=1-110"/>
</dbReference>
<dbReference type="PDB" id="6WDM">
    <property type="method" value="EM"/>
    <property type="resolution" value="3.60 A"/>
    <property type="chains" value="s=1-110"/>
</dbReference>
<dbReference type="PDB" id="6WNT">
    <property type="method" value="EM"/>
    <property type="resolution" value="3.10 A"/>
    <property type="chains" value="s=1-110"/>
</dbReference>
<dbReference type="PDB" id="6WNV">
    <property type="method" value="EM"/>
    <property type="resolution" value="3.50 A"/>
    <property type="chains" value="s=1-110"/>
</dbReference>
<dbReference type="PDB" id="6WNW">
    <property type="method" value="EM"/>
    <property type="resolution" value="3.20 A"/>
    <property type="chains" value="s=1-110"/>
</dbReference>
<dbReference type="PDB" id="6X6T">
    <property type="method" value="EM"/>
    <property type="resolution" value="3.20 A"/>
    <property type="chains" value="1=1-110"/>
</dbReference>
<dbReference type="PDB" id="6X7F">
    <property type="method" value="EM"/>
    <property type="resolution" value="3.50 A"/>
    <property type="chains" value="1=1-110"/>
</dbReference>
<dbReference type="PDB" id="6X7K">
    <property type="method" value="EM"/>
    <property type="resolution" value="3.10 A"/>
    <property type="chains" value="1=1-110"/>
</dbReference>
<dbReference type="PDB" id="6X9Q">
    <property type="method" value="EM"/>
    <property type="resolution" value="4.80 A"/>
    <property type="chains" value="1=1-110"/>
</dbReference>
<dbReference type="PDB" id="6XDQ">
    <property type="method" value="EM"/>
    <property type="resolution" value="3.70 A"/>
    <property type="chains" value="1=1-110"/>
</dbReference>
<dbReference type="PDB" id="6XDR">
    <property type="method" value="EM"/>
    <property type="resolution" value="4.70 A"/>
    <property type="chains" value="1=1-110"/>
</dbReference>
<dbReference type="PDB" id="6XGF">
    <property type="method" value="EM"/>
    <property type="resolution" value="5.00 A"/>
    <property type="chains" value="1=1-110"/>
</dbReference>
<dbReference type="PDB" id="6XII">
    <property type="method" value="EM"/>
    <property type="resolution" value="7.00 A"/>
    <property type="chains" value="1=1-110"/>
</dbReference>
<dbReference type="PDB" id="6XIJ">
    <property type="method" value="EM"/>
    <property type="resolution" value="8.00 A"/>
    <property type="chains" value="1=1-110"/>
</dbReference>
<dbReference type="PDB" id="6XZ7">
    <property type="method" value="EM"/>
    <property type="resolution" value="2.10 A"/>
    <property type="chains" value="S=1-110"/>
</dbReference>
<dbReference type="PDB" id="6XZA">
    <property type="method" value="EM"/>
    <property type="resolution" value="2.66 A"/>
    <property type="chains" value="S2=1-110"/>
</dbReference>
<dbReference type="PDB" id="6XZB">
    <property type="method" value="EM"/>
    <property type="resolution" value="2.54 A"/>
    <property type="chains" value="S2=1-110"/>
</dbReference>
<dbReference type="PDB" id="6Y69">
    <property type="method" value="EM"/>
    <property type="resolution" value="2.86 A"/>
    <property type="chains" value="S=1-110"/>
</dbReference>
<dbReference type="PDB" id="6YS3">
    <property type="method" value="EM"/>
    <property type="resolution" value="2.58 A"/>
    <property type="chains" value="s=1-110"/>
</dbReference>
<dbReference type="PDB" id="6YSR">
    <property type="method" value="EM"/>
    <property type="resolution" value="3.10 A"/>
    <property type="chains" value="S=1-110"/>
</dbReference>
<dbReference type="PDB" id="6YSS">
    <property type="method" value="EM"/>
    <property type="resolution" value="2.60 A"/>
    <property type="chains" value="S=1-110"/>
</dbReference>
<dbReference type="PDB" id="6YST">
    <property type="method" value="EM"/>
    <property type="resolution" value="3.20 A"/>
    <property type="chains" value="S=1-110"/>
</dbReference>
<dbReference type="PDB" id="6YSU">
    <property type="method" value="EM"/>
    <property type="resolution" value="3.70 A"/>
    <property type="chains" value="S=1-110"/>
</dbReference>
<dbReference type="PDB" id="6ZTJ">
    <property type="method" value="EM"/>
    <property type="resolution" value="3.40 A"/>
    <property type="chains" value="BT=1-110"/>
</dbReference>
<dbReference type="PDB" id="6ZTL">
    <property type="method" value="EM"/>
    <property type="resolution" value="3.50 A"/>
    <property type="chains" value="BT=1-110"/>
</dbReference>
<dbReference type="PDB" id="6ZTM">
    <property type="method" value="EM"/>
    <property type="resolution" value="3.30 A"/>
    <property type="chains" value="BT=1-110"/>
</dbReference>
<dbReference type="PDB" id="6ZTN">
    <property type="method" value="EM"/>
    <property type="resolution" value="3.90 A"/>
    <property type="chains" value="BT=1-110"/>
</dbReference>
<dbReference type="PDB" id="6ZTO">
    <property type="method" value="EM"/>
    <property type="resolution" value="3.00 A"/>
    <property type="chains" value="BT=1-110"/>
</dbReference>
<dbReference type="PDB" id="6ZTP">
    <property type="method" value="EM"/>
    <property type="resolution" value="3.00 A"/>
    <property type="chains" value="BT=1-110"/>
</dbReference>
<dbReference type="PDB" id="6ZU1">
    <property type="method" value="EM"/>
    <property type="resolution" value="3.00 A"/>
    <property type="chains" value="BT=1-110"/>
</dbReference>
<dbReference type="PDB" id="7ABZ">
    <property type="method" value="EM"/>
    <property type="resolution" value="3.21 A"/>
    <property type="chains" value="S=1-110"/>
</dbReference>
<dbReference type="PDB" id="7AC7">
    <property type="method" value="EM"/>
    <property type="resolution" value="3.08 A"/>
    <property type="chains" value="S=2-110"/>
</dbReference>
<dbReference type="PDB" id="7ACJ">
    <property type="method" value="EM"/>
    <property type="resolution" value="3.20 A"/>
    <property type="chains" value="S=1-110"/>
</dbReference>
<dbReference type="PDB" id="7ACR">
    <property type="method" value="EM"/>
    <property type="resolution" value="3.44 A"/>
    <property type="chains" value="S=1-110"/>
</dbReference>
<dbReference type="PDB" id="7B5K">
    <property type="method" value="EM"/>
    <property type="resolution" value="2.90 A"/>
    <property type="chains" value="S=1-110"/>
</dbReference>
<dbReference type="PDB" id="7BL2">
    <property type="method" value="EM"/>
    <property type="resolution" value="3.70 A"/>
    <property type="chains" value="S=1-110"/>
</dbReference>
<dbReference type="PDB" id="7BL3">
    <property type="method" value="EM"/>
    <property type="resolution" value="3.50 A"/>
    <property type="chains" value="S=1-110"/>
</dbReference>
<dbReference type="PDB" id="7BL4">
    <property type="method" value="EM"/>
    <property type="resolution" value="2.40 A"/>
    <property type="chains" value="S=1-110"/>
</dbReference>
<dbReference type="PDB" id="7BL5">
    <property type="method" value="EM"/>
    <property type="resolution" value="3.30 A"/>
    <property type="chains" value="S=1-110"/>
</dbReference>
<dbReference type="PDB" id="7BL6">
    <property type="method" value="EM"/>
    <property type="resolution" value="4.00 A"/>
    <property type="chains" value="S=1-110"/>
</dbReference>
<dbReference type="PDB" id="7BV8">
    <property type="method" value="EM"/>
    <property type="resolution" value="3.14 A"/>
    <property type="chains" value="T=1-110"/>
</dbReference>
<dbReference type="PDB" id="7D6Z">
    <property type="method" value="EM"/>
    <property type="resolution" value="3.40 A"/>
    <property type="chains" value="S=1-110"/>
</dbReference>
<dbReference type="PDB" id="7D80">
    <property type="method" value="EM"/>
    <property type="resolution" value="4.10 A"/>
    <property type="chains" value="r=1-110"/>
</dbReference>
<dbReference type="PDB" id="7JSS">
    <property type="method" value="EM"/>
    <property type="resolution" value="3.70 A"/>
    <property type="chains" value="s=1-110"/>
</dbReference>
<dbReference type="PDB" id="7JSW">
    <property type="method" value="EM"/>
    <property type="resolution" value="3.80 A"/>
    <property type="chains" value="s=1-110"/>
</dbReference>
<dbReference type="PDB" id="7JSZ">
    <property type="method" value="EM"/>
    <property type="resolution" value="3.70 A"/>
    <property type="chains" value="s=1-110"/>
</dbReference>
<dbReference type="PDB" id="7JT1">
    <property type="method" value="EM"/>
    <property type="resolution" value="3.30 A"/>
    <property type="chains" value="s=1-110"/>
</dbReference>
<dbReference type="PDB" id="7JT2">
    <property type="method" value="EM"/>
    <property type="resolution" value="3.50 A"/>
    <property type="chains" value="s=1-110"/>
</dbReference>
<dbReference type="PDB" id="7JT3">
    <property type="method" value="EM"/>
    <property type="resolution" value="3.70 A"/>
    <property type="chains" value="s=1-110"/>
</dbReference>
<dbReference type="PDB" id="7K00">
    <property type="method" value="EM"/>
    <property type="resolution" value="1.98 A"/>
    <property type="chains" value="r=1-110"/>
</dbReference>
<dbReference type="PDB" id="7K50">
    <property type="method" value="EM"/>
    <property type="resolution" value="3.40 A"/>
    <property type="chains" value="s=1-110"/>
</dbReference>
<dbReference type="PDB" id="7K51">
    <property type="method" value="EM"/>
    <property type="resolution" value="3.50 A"/>
    <property type="chains" value="s=1-110"/>
</dbReference>
<dbReference type="PDB" id="7K52">
    <property type="method" value="EM"/>
    <property type="resolution" value="3.40 A"/>
    <property type="chains" value="s=1-110"/>
</dbReference>
<dbReference type="PDB" id="7K53">
    <property type="method" value="EM"/>
    <property type="resolution" value="3.20 A"/>
    <property type="chains" value="s=1-110"/>
</dbReference>
<dbReference type="PDB" id="7K54">
    <property type="method" value="EM"/>
    <property type="resolution" value="3.20 A"/>
    <property type="chains" value="s=1-110"/>
</dbReference>
<dbReference type="PDB" id="7K55">
    <property type="method" value="EM"/>
    <property type="resolution" value="3.30 A"/>
    <property type="chains" value="s=1-110"/>
</dbReference>
<dbReference type="PDB" id="7LV0">
    <property type="method" value="EM"/>
    <property type="resolution" value="3.20 A"/>
    <property type="chains" value="s=1-110"/>
</dbReference>
<dbReference type="PDB" id="7LVK">
    <property type="method" value="EM"/>
    <property type="resolution" value="2.20 A"/>
    <property type="chains" value="a=1-110"/>
</dbReference>
<dbReference type="PDB" id="7M5D">
    <property type="method" value="EM"/>
    <property type="resolution" value="2.80 A"/>
    <property type="chains" value="S=1-110"/>
</dbReference>
<dbReference type="PDB" id="7N1P">
    <property type="method" value="EM"/>
    <property type="resolution" value="2.33 A"/>
    <property type="chains" value="LV=1-110"/>
</dbReference>
<dbReference type="PDB" id="7N2C">
    <property type="method" value="EM"/>
    <property type="resolution" value="2.72 A"/>
    <property type="chains" value="LV=1-110"/>
</dbReference>
<dbReference type="PDB" id="7N2U">
    <property type="method" value="EM"/>
    <property type="resolution" value="2.53 A"/>
    <property type="chains" value="LV=1-110"/>
</dbReference>
<dbReference type="PDB" id="7N2V">
    <property type="method" value="EM"/>
    <property type="resolution" value="2.54 A"/>
    <property type="chains" value="LV=1-110"/>
</dbReference>
<dbReference type="PDB" id="7N30">
    <property type="method" value="EM"/>
    <property type="resolution" value="2.66 A"/>
    <property type="chains" value="LV=1-110"/>
</dbReference>
<dbReference type="PDB" id="7N31">
    <property type="method" value="EM"/>
    <property type="resolution" value="2.69 A"/>
    <property type="chains" value="LV=1-110"/>
</dbReference>
<dbReference type="PDB" id="7NBU">
    <property type="method" value="EM"/>
    <property type="resolution" value="3.11 A"/>
    <property type="chains" value="r=1-110"/>
</dbReference>
<dbReference type="PDB" id="7NSO">
    <property type="method" value="EM"/>
    <property type="resolution" value="2.90 A"/>
    <property type="chains" value="S=1-110"/>
</dbReference>
<dbReference type="PDB" id="7NSP">
    <property type="method" value="EM"/>
    <property type="resolution" value="3.50 A"/>
    <property type="chains" value="S=1-110"/>
</dbReference>
<dbReference type="PDB" id="7NSQ">
    <property type="method" value="EM"/>
    <property type="resolution" value="3.10 A"/>
    <property type="chains" value="S=1-110"/>
</dbReference>
<dbReference type="PDB" id="7NWT">
    <property type="method" value="EM"/>
    <property type="resolution" value="2.66 A"/>
    <property type="chains" value="S=1-110"/>
</dbReference>
<dbReference type="PDB" id="7NWW">
    <property type="method" value="EM"/>
    <property type="resolution" value="3.05 A"/>
    <property type="chains" value="R=1-110"/>
</dbReference>
<dbReference type="PDB" id="7O19">
    <property type="method" value="EM"/>
    <property type="resolution" value="2.90 A"/>
    <property type="chains" value="BS=1-110"/>
</dbReference>
<dbReference type="PDB" id="7O1A">
    <property type="method" value="EM"/>
    <property type="resolution" value="2.40 A"/>
    <property type="chains" value="BS=1-110"/>
</dbReference>
<dbReference type="PDB" id="7O1C">
    <property type="method" value="EM"/>
    <property type="resolution" value="2.60 A"/>
    <property type="chains" value="BS=1-110"/>
</dbReference>
<dbReference type="PDB" id="7ODE">
    <property type="method" value="EM"/>
    <property type="resolution" value="2.84 A"/>
    <property type="chains" value="a=1-110"/>
</dbReference>
<dbReference type="PDB" id="7OIF">
    <property type="method" value="EM"/>
    <property type="resolution" value="3.00 A"/>
    <property type="chains" value="R=1-110"/>
</dbReference>
<dbReference type="PDB" id="7OIG">
    <property type="method" value="EM"/>
    <property type="resolution" value="3.20 A"/>
    <property type="chains" value="R=1-110"/>
</dbReference>
<dbReference type="PDB" id="7OII">
    <property type="method" value="EM"/>
    <property type="resolution" value="3.00 A"/>
    <property type="chains" value="R=1-110"/>
</dbReference>
<dbReference type="PDB" id="7OIZ">
    <property type="method" value="EM"/>
    <property type="resolution" value="2.90 A"/>
    <property type="chains" value="r=1-110"/>
</dbReference>
<dbReference type="PDB" id="7OJ0">
    <property type="method" value="EM"/>
    <property type="resolution" value="3.50 A"/>
    <property type="chains" value="r=1-110"/>
</dbReference>
<dbReference type="PDB" id="7OT5">
    <property type="method" value="EM"/>
    <property type="resolution" value="2.90 A"/>
    <property type="chains" value="R=1-110"/>
</dbReference>
<dbReference type="PDB" id="7P3K">
    <property type="method" value="EM"/>
    <property type="resolution" value="2.90 A"/>
    <property type="chains" value="r=1-110"/>
</dbReference>
<dbReference type="PDB" id="7PJS">
    <property type="method" value="EM"/>
    <property type="resolution" value="2.35 A"/>
    <property type="chains" value="S=1-110"/>
</dbReference>
<dbReference type="PDB" id="7PJT">
    <property type="method" value="EM"/>
    <property type="resolution" value="6.00 A"/>
    <property type="chains" value="S=1-110"/>
</dbReference>
<dbReference type="PDB" id="7PJU">
    <property type="method" value="EM"/>
    <property type="resolution" value="9.50 A"/>
    <property type="chains" value="S=1-110"/>
</dbReference>
<dbReference type="PDB" id="7PJV">
    <property type="method" value="EM"/>
    <property type="resolution" value="3.10 A"/>
    <property type="chains" value="S=1-110"/>
</dbReference>
<dbReference type="PDB" id="7PJW">
    <property type="method" value="EM"/>
    <property type="resolution" value="4.00 A"/>
    <property type="chains" value="S=1-110"/>
</dbReference>
<dbReference type="PDB" id="7PJX">
    <property type="method" value="EM"/>
    <property type="resolution" value="6.50 A"/>
    <property type="chains" value="S=1-110"/>
</dbReference>
<dbReference type="PDB" id="7PJY">
    <property type="method" value="EM"/>
    <property type="resolution" value="3.10 A"/>
    <property type="chains" value="S=1-110"/>
</dbReference>
<dbReference type="PDB" id="7PJZ">
    <property type="method" value="EM"/>
    <property type="resolution" value="6.00 A"/>
    <property type="chains" value="S=1-110"/>
</dbReference>
<dbReference type="PDB" id="7Q4K">
    <property type="method" value="EM"/>
    <property type="resolution" value="3.00 A"/>
    <property type="chains" value="BS=1-110"/>
</dbReference>
<dbReference type="PDB" id="7QG8">
    <property type="method" value="EM"/>
    <property type="resolution" value="3.97 A"/>
    <property type="chains" value="f=1-110"/>
</dbReference>
<dbReference type="PDB" id="7QGH">
    <property type="method" value="EM"/>
    <property type="resolution" value="4.48 A"/>
    <property type="chains" value="f=1-110"/>
</dbReference>
<dbReference type="PDB" id="7QGN">
    <property type="method" value="EM"/>
    <property type="resolution" value="3.37 A"/>
    <property type="chains" value="f=1-110"/>
</dbReference>
<dbReference type="PDB" id="7QGR">
    <property type="method" value="EM"/>
    <property type="resolution" value="5.70 A"/>
    <property type="chains" value="f=1-110"/>
</dbReference>
<dbReference type="PDB" id="7QQ3">
    <property type="method" value="EM"/>
    <property type="resolution" value="2.10 A"/>
    <property type="chains" value="a=1-110"/>
</dbReference>
<dbReference type="PDB" id="7S1G">
    <property type="method" value="EM"/>
    <property type="resolution" value="2.48 A"/>
    <property type="chains" value="a=1-110"/>
</dbReference>
<dbReference type="PDB" id="7S1H">
    <property type="method" value="EM"/>
    <property type="resolution" value="2.35 A"/>
    <property type="chains" value="a=1-110"/>
</dbReference>
<dbReference type="PDB" id="7S1I">
    <property type="method" value="EM"/>
    <property type="resolution" value="2.48 A"/>
    <property type="chains" value="a=1-110"/>
</dbReference>
<dbReference type="PDB" id="7S1J">
    <property type="method" value="EM"/>
    <property type="resolution" value="2.47 A"/>
    <property type="chains" value="a=1-110"/>
</dbReference>
<dbReference type="PDB" id="7S1K">
    <property type="method" value="EM"/>
    <property type="resolution" value="2.42 A"/>
    <property type="chains" value="a=1-110"/>
</dbReference>
<dbReference type="PDB" id="7SA4">
    <property type="method" value="EM"/>
    <property type="resolution" value="2.55 A"/>
    <property type="chains" value="S=1-110"/>
</dbReference>
<dbReference type="PDB" id="7SS9">
    <property type="method" value="EM"/>
    <property type="resolution" value="3.90 A"/>
    <property type="chains" value="s=1-110"/>
</dbReference>
<dbReference type="PDB" id="7SSD">
    <property type="method" value="EM"/>
    <property type="resolution" value="3.30 A"/>
    <property type="chains" value="s=1-110"/>
</dbReference>
<dbReference type="PDB" id="7SSL">
    <property type="method" value="EM"/>
    <property type="resolution" value="3.80 A"/>
    <property type="chains" value="s=1-110"/>
</dbReference>
<dbReference type="PDB" id="7SSN">
    <property type="method" value="EM"/>
    <property type="resolution" value="3.20 A"/>
    <property type="chains" value="s=1-110"/>
</dbReference>
<dbReference type="PDB" id="7SSO">
    <property type="method" value="EM"/>
    <property type="resolution" value="3.20 A"/>
    <property type="chains" value="s=1-110"/>
</dbReference>
<dbReference type="PDB" id="7SSW">
    <property type="method" value="EM"/>
    <property type="resolution" value="3.80 A"/>
    <property type="chains" value="s=1-110"/>
</dbReference>
<dbReference type="PDB" id="7ST2">
    <property type="method" value="EM"/>
    <property type="resolution" value="2.90 A"/>
    <property type="chains" value="s=1-110"/>
</dbReference>
<dbReference type="PDB" id="7ST6">
    <property type="method" value="EM"/>
    <property type="resolution" value="3.00 A"/>
    <property type="chains" value="s=1-110"/>
</dbReference>
<dbReference type="PDB" id="7ST7">
    <property type="method" value="EM"/>
    <property type="resolution" value="3.20 A"/>
    <property type="chains" value="s=1-110"/>
</dbReference>
<dbReference type="PDB" id="7TOS">
    <property type="method" value="EM"/>
    <property type="resolution" value="2.90 A"/>
    <property type="chains" value="L22=1-110"/>
</dbReference>
<dbReference type="PDB" id="7UG7">
    <property type="method" value="EM"/>
    <property type="resolution" value="2.58 A"/>
    <property type="chains" value="LV=1-110"/>
</dbReference>
<dbReference type="PDB" id="7UPH">
    <property type="method" value="EM"/>
    <property type="resolution" value="4.18 A"/>
    <property type="chains" value="r=1-110"/>
</dbReference>
<dbReference type="PDB" id="7Y7C">
    <property type="method" value="EM"/>
    <property type="resolution" value="2.51 A"/>
    <property type="chains" value="r=1-110"/>
</dbReference>
<dbReference type="PDB" id="7Y7D">
    <property type="method" value="EM"/>
    <property type="resolution" value="2.58 A"/>
    <property type="chains" value="r=1-110"/>
</dbReference>
<dbReference type="PDB" id="7Y7E">
    <property type="method" value="EM"/>
    <property type="resolution" value="2.41 A"/>
    <property type="chains" value="r=1-110"/>
</dbReference>
<dbReference type="PDB" id="7Y7F">
    <property type="method" value="EM"/>
    <property type="resolution" value="2.43 A"/>
    <property type="chains" value="r=1-110"/>
</dbReference>
<dbReference type="PDB" id="7Y7G">
    <property type="method" value="EM"/>
    <property type="resolution" value="2.34 A"/>
    <property type="chains" value="r=1-110"/>
</dbReference>
<dbReference type="PDB" id="7Y7H">
    <property type="method" value="EM"/>
    <property type="resolution" value="2.51 A"/>
    <property type="chains" value="r=1-110"/>
</dbReference>
<dbReference type="PDB" id="7YLA">
    <property type="method" value="EM"/>
    <property type="resolution" value="2.52 A"/>
    <property type="chains" value="a=1-110"/>
</dbReference>
<dbReference type="PDB" id="7Z20">
    <property type="method" value="EM"/>
    <property type="resolution" value="2.29 A"/>
    <property type="chains" value="s=1-110"/>
</dbReference>
<dbReference type="PDB" id="7ZOD">
    <property type="method" value="EM"/>
    <property type="resolution" value="2.56 A"/>
    <property type="chains" value="s=1-110"/>
</dbReference>
<dbReference type="PDB" id="7ZP8">
    <property type="method" value="EM"/>
    <property type="resolution" value="2.20 A"/>
    <property type="chains" value="s=1-110"/>
</dbReference>
<dbReference type="PDB" id="7ZQ5">
    <property type="method" value="EM"/>
    <property type="resolution" value="2.70 A"/>
    <property type="chains" value="s=1-110"/>
</dbReference>
<dbReference type="PDB" id="7ZQ6">
    <property type="method" value="EM"/>
    <property type="resolution" value="2.75 A"/>
    <property type="chains" value="s=1-110"/>
</dbReference>
<dbReference type="PDB" id="7ZTA">
    <property type="method" value="EM"/>
    <property type="resolution" value="2.70 A"/>
    <property type="chains" value="L221=1-110"/>
</dbReference>
<dbReference type="PDB" id="8A3L">
    <property type="method" value="EM"/>
    <property type="resolution" value="3.42 A"/>
    <property type="chains" value="r=1-110"/>
</dbReference>
<dbReference type="PDB" id="8AKN">
    <property type="method" value="EM"/>
    <property type="resolution" value="2.30 A"/>
    <property type="chains" value="r=1-110"/>
</dbReference>
<dbReference type="PDB" id="8AM9">
    <property type="method" value="EM"/>
    <property type="resolution" value="2.80 A"/>
    <property type="chains" value="r=1-110"/>
</dbReference>
<dbReference type="PDB" id="8ANA">
    <property type="method" value="EM"/>
    <property type="resolution" value="2.10 A"/>
    <property type="chains" value="r=1-110"/>
</dbReference>
<dbReference type="PDB" id="8AP4">
    <property type="method" value="EM"/>
    <property type="resolution" value="3.00 A"/>
    <property type="chains" value="r=1-110"/>
</dbReference>
<dbReference type="PDB" id="8AYE">
    <property type="method" value="EM"/>
    <property type="resolution" value="1.96 A"/>
    <property type="chains" value="r=1-110"/>
</dbReference>
<dbReference type="PDB" id="8B0X">
    <property type="method" value="EM"/>
    <property type="resolution" value="1.55 A"/>
    <property type="chains" value="r=1-110"/>
</dbReference>
<dbReference type="PDB" id="8B7Y">
    <property type="method" value="EM"/>
    <property type="resolution" value="3.00 A"/>
    <property type="chains" value="a=1-110"/>
</dbReference>
<dbReference type="PDB" id="8BF7">
    <property type="method" value="EM"/>
    <property type="resolution" value="2.33 A"/>
    <property type="chains" value="P=1-110"/>
</dbReference>
<dbReference type="PDB" id="8BGE">
    <property type="method" value="EM"/>
    <property type="resolution" value="2.11 A"/>
    <property type="chains" value="P=1-110"/>
</dbReference>
<dbReference type="PDB" id="8BGH">
    <property type="method" value="EM"/>
    <property type="resolution" value="2.88 A"/>
    <property type="chains" value="P=1-110"/>
</dbReference>
<dbReference type="PDB" id="8BH4">
    <property type="method" value="EM"/>
    <property type="resolution" value="2.62 A"/>
    <property type="chains" value="P=1-110"/>
</dbReference>
<dbReference type="PDB" id="8BHJ">
    <property type="method" value="EM"/>
    <property type="resolution" value="2.81 A"/>
    <property type="chains" value="P=1-110"/>
</dbReference>
<dbReference type="PDB" id="8BHL">
    <property type="method" value="EM"/>
    <property type="resolution" value="2.21 A"/>
    <property type="chains" value="P=1-110"/>
</dbReference>
<dbReference type="PDB" id="8BHN">
    <property type="method" value="EM"/>
    <property type="resolution" value="2.85 A"/>
    <property type="chains" value="P=1-110"/>
</dbReference>
<dbReference type="PDB" id="8BHP">
    <property type="method" value="EM"/>
    <property type="resolution" value="2.37 A"/>
    <property type="chains" value="P=1-110"/>
</dbReference>
<dbReference type="PDB" id="8BIL">
    <property type="method" value="EM"/>
    <property type="resolution" value="2.04 A"/>
    <property type="chains" value="P=1-110"/>
</dbReference>
<dbReference type="PDB" id="8BIM">
    <property type="method" value="EM"/>
    <property type="resolution" value="2.04 A"/>
    <property type="chains" value="P=1-110"/>
</dbReference>
<dbReference type="PDB" id="8C8X">
    <property type="method" value="EM"/>
    <property type="resolution" value="3.93 A"/>
    <property type="chains" value="S=1-110"/>
</dbReference>
<dbReference type="PDB" id="8C8Y">
    <property type="method" value="EM"/>
    <property type="resolution" value="3.03 A"/>
    <property type="chains" value="S=1-110"/>
</dbReference>
<dbReference type="PDB" id="8C8Z">
    <property type="method" value="EM"/>
    <property type="resolution" value="3.12 A"/>
    <property type="chains" value="S=1-110"/>
</dbReference>
<dbReference type="PDB" id="8C90">
    <property type="method" value="EM"/>
    <property type="resolution" value="3.15 A"/>
    <property type="chains" value="S=1-110"/>
</dbReference>
<dbReference type="PDB" id="8C91">
    <property type="method" value="EM"/>
    <property type="resolution" value="4.19 A"/>
    <property type="chains" value="S=1-110"/>
</dbReference>
<dbReference type="PDB" id="8C92">
    <property type="method" value="EM"/>
    <property type="resolution" value="3.79 A"/>
    <property type="chains" value="S=1-110"/>
</dbReference>
<dbReference type="PDB" id="8C93">
    <property type="method" value="EM"/>
    <property type="resolution" value="4.17 A"/>
    <property type="chains" value="S=1-110"/>
</dbReference>
<dbReference type="PDB" id="8C94">
    <property type="method" value="EM"/>
    <property type="resolution" value="3.80 A"/>
    <property type="chains" value="S=1-110"/>
</dbReference>
<dbReference type="PDB" id="8C95">
    <property type="method" value="EM"/>
    <property type="resolution" value="4.92 A"/>
    <property type="chains" value="S=1-110"/>
</dbReference>
<dbReference type="PDB" id="8C96">
    <property type="method" value="EM"/>
    <property type="resolution" value="4.43 A"/>
    <property type="chains" value="S=1-110"/>
</dbReference>
<dbReference type="PDB" id="8C97">
    <property type="method" value="EM"/>
    <property type="resolution" value="4.07 A"/>
    <property type="chains" value="S=1-110"/>
</dbReference>
<dbReference type="PDB" id="8C98">
    <property type="method" value="EM"/>
    <property type="resolution" value="3.66 A"/>
    <property type="chains" value="S=1-110"/>
</dbReference>
<dbReference type="PDB" id="8C99">
    <property type="method" value="EM"/>
    <property type="resolution" value="3.29 A"/>
    <property type="chains" value="S=1-110"/>
</dbReference>
<dbReference type="PDB" id="8C9A">
    <property type="method" value="EM"/>
    <property type="resolution" value="4.86 A"/>
    <property type="chains" value="S=1-110"/>
</dbReference>
<dbReference type="PDB" id="8C9B">
    <property type="method" value="EM"/>
    <property type="resolution" value="5.90 A"/>
    <property type="chains" value="S=1-110"/>
</dbReference>
<dbReference type="PDB" id="8C9C">
    <property type="method" value="EM"/>
    <property type="resolution" value="6.62 A"/>
    <property type="chains" value="S=1-110"/>
</dbReference>
<dbReference type="PDB" id="8CAM">
    <property type="method" value="EM"/>
    <property type="resolution" value="1.86 A"/>
    <property type="chains" value="r=1-110"/>
</dbReference>
<dbReference type="PDB" id="8CEU">
    <property type="method" value="EM"/>
    <property type="resolution" value="1.83 A"/>
    <property type="chains" value="r=1-110"/>
</dbReference>
<dbReference type="PDB" id="8CGD">
    <property type="method" value="EM"/>
    <property type="resolution" value="1.98 A"/>
    <property type="chains" value="r=1-110"/>
</dbReference>
<dbReference type="PDB" id="8CGK">
    <property type="method" value="EM"/>
    <property type="resolution" value="1.64 A"/>
    <property type="chains" value="r=1-110"/>
</dbReference>
<dbReference type="PDB" id="8CGV">
    <property type="method" value="EM"/>
    <property type="resolution" value="1.66 A"/>
    <property type="chains" value="r=1-110"/>
</dbReference>
<dbReference type="PDB" id="8E30">
    <property type="method" value="EM"/>
    <property type="resolution" value="1.91 A"/>
    <property type="chains" value="P=1-110"/>
</dbReference>
<dbReference type="PDB" id="8E32">
    <property type="method" value="EM"/>
    <property type="resolution" value="2.35 A"/>
    <property type="chains" value="P=1-110"/>
</dbReference>
<dbReference type="PDB" id="8E33">
    <property type="method" value="EM"/>
    <property type="resolution" value="2.23 A"/>
    <property type="chains" value="P=1-110"/>
</dbReference>
<dbReference type="PDB" id="8E35">
    <property type="method" value="EM"/>
    <property type="resolution" value="2.27 A"/>
    <property type="chains" value="P=1-110"/>
</dbReference>
<dbReference type="PDB" id="8E36">
    <property type="method" value="EM"/>
    <property type="resolution" value="2.38 A"/>
    <property type="chains" value="P=1-110"/>
</dbReference>
<dbReference type="PDB" id="8E3L">
    <property type="method" value="EM"/>
    <property type="resolution" value="2.35 A"/>
    <property type="chains" value="P=1-110"/>
</dbReference>
<dbReference type="PDB" id="8E3M">
    <property type="method" value="EM"/>
    <property type="resolution" value="2.25 A"/>
    <property type="chains" value="P=1-110"/>
</dbReference>
<dbReference type="PDB" id="8E3O">
    <property type="method" value="EM"/>
    <property type="resolution" value="1.99 A"/>
    <property type="chains" value="P=1-110"/>
</dbReference>
<dbReference type="PDB" id="8E41">
    <property type="method" value="EM"/>
    <property type="resolution" value="2.13 A"/>
    <property type="chains" value="P=1-110"/>
</dbReference>
<dbReference type="PDB" id="8E42">
    <property type="method" value="EM"/>
    <property type="resolution" value="2.29 A"/>
    <property type="chains" value="P=1-110"/>
</dbReference>
<dbReference type="PDB" id="8E43">
    <property type="method" value="EM"/>
    <property type="resolution" value="2.09 A"/>
    <property type="chains" value="P=1-110"/>
</dbReference>
<dbReference type="PDB" id="8E44">
    <property type="method" value="EM"/>
    <property type="resolution" value="2.53 A"/>
    <property type="chains" value="P=1-110"/>
</dbReference>
<dbReference type="PDB" id="8E45">
    <property type="method" value="EM"/>
    <property type="resolution" value="2.30 A"/>
    <property type="chains" value="P=1-110"/>
</dbReference>
<dbReference type="PDB" id="8E46">
    <property type="method" value="EM"/>
    <property type="resolution" value="2.32 A"/>
    <property type="chains" value="P=1-110"/>
</dbReference>
<dbReference type="PDB" id="8E47">
    <property type="method" value="EM"/>
    <property type="resolution" value="2.32 A"/>
    <property type="chains" value="P=1-110"/>
</dbReference>
<dbReference type="PDB" id="8E48">
    <property type="method" value="EM"/>
    <property type="resolution" value="2.27 A"/>
    <property type="chains" value="P=1-110"/>
</dbReference>
<dbReference type="PDB" id="8E49">
    <property type="method" value="EM"/>
    <property type="resolution" value="2.05 A"/>
    <property type="chains" value="P=1-110"/>
</dbReference>
<dbReference type="PDB" id="8EIU">
    <property type="method" value="EM"/>
    <property type="resolution" value="2.24 A"/>
    <property type="chains" value="r=1-110"/>
</dbReference>
<dbReference type="PDB" id="8EKC">
    <property type="method" value="EM"/>
    <property type="resolution" value="2.70 A"/>
    <property type="chains" value="U=1-110"/>
</dbReference>
<dbReference type="PDB" id="8EMM">
    <property type="method" value="EM"/>
    <property type="resolution" value="2.10 A"/>
    <property type="chains" value="r=1-110"/>
</dbReference>
<dbReference type="PDB" id="8FIZ">
    <property type="method" value="EM"/>
    <property type="resolution" value="3.80 A"/>
    <property type="chains" value="BZ=1-110"/>
</dbReference>
<dbReference type="PDB" id="8FTO">
    <property type="method" value="EM"/>
    <property type="resolution" value="1.85 A"/>
    <property type="chains" value="r=1-110"/>
</dbReference>
<dbReference type="PDB" id="8FZD">
    <property type="method" value="EM"/>
    <property type="resolution" value="3.10 A"/>
    <property type="chains" value="U=1-110"/>
</dbReference>
<dbReference type="PDB" id="8FZE">
    <property type="method" value="EM"/>
    <property type="resolution" value="3.00 A"/>
    <property type="chains" value="U=1-110"/>
</dbReference>
<dbReference type="PDB" id="8FZF">
    <property type="method" value="EM"/>
    <property type="resolution" value="3.20 A"/>
    <property type="chains" value="U=1-110"/>
</dbReference>
<dbReference type="PDB" id="8FZG">
    <property type="method" value="EM"/>
    <property type="resolution" value="3.10 A"/>
    <property type="chains" value="U=1-110"/>
</dbReference>
<dbReference type="PDB" id="8FZH">
    <property type="method" value="EM"/>
    <property type="resolution" value="2.90 A"/>
    <property type="chains" value="U=1-110"/>
</dbReference>
<dbReference type="PDB" id="8FZI">
    <property type="method" value="EM"/>
    <property type="resolution" value="3.10 A"/>
    <property type="chains" value="U=1-110"/>
</dbReference>
<dbReference type="PDB" id="8FZJ">
    <property type="method" value="EM"/>
    <property type="resolution" value="3.00 A"/>
    <property type="chains" value="U=1-110"/>
</dbReference>
<dbReference type="PDB" id="8G2U">
    <property type="method" value="EM"/>
    <property type="resolution" value="3.00 A"/>
    <property type="chains" value="S=1-110"/>
</dbReference>
<dbReference type="PDB" id="8G31">
    <property type="method" value="EM"/>
    <property type="resolution" value="3.20 A"/>
    <property type="chains" value="S=1-110"/>
</dbReference>
<dbReference type="PDB" id="8G34">
    <property type="method" value="EM"/>
    <property type="resolution" value="3.20 A"/>
    <property type="chains" value="S=1-110"/>
</dbReference>
<dbReference type="PDB" id="8G38">
    <property type="method" value="EM"/>
    <property type="resolution" value="3.20 A"/>
    <property type="chains" value="S=1-110"/>
</dbReference>
<dbReference type="PDB" id="8G6W">
    <property type="method" value="EM"/>
    <property type="resolution" value="2.02 A"/>
    <property type="chains" value="r=1-110"/>
</dbReference>
<dbReference type="PDB" id="8G6X">
    <property type="method" value="EM"/>
    <property type="resolution" value="2.31 A"/>
    <property type="chains" value="r=1-110"/>
</dbReference>
<dbReference type="PDB" id="8G6Y">
    <property type="method" value="EM"/>
    <property type="resolution" value="2.09 A"/>
    <property type="chains" value="r=1-110"/>
</dbReference>
<dbReference type="PDB" id="8G7P">
    <property type="method" value="EM"/>
    <property type="resolution" value="2.90 A"/>
    <property type="chains" value="U=1-110"/>
</dbReference>
<dbReference type="PDB" id="8G7Q">
    <property type="method" value="EM"/>
    <property type="resolution" value="3.10 A"/>
    <property type="chains" value="U=1-110"/>
</dbReference>
<dbReference type="PDB" id="8G7R">
    <property type="method" value="EM"/>
    <property type="resolution" value="2.80 A"/>
    <property type="chains" value="U=1-110"/>
</dbReference>
<dbReference type="PDB" id="8G7S">
    <property type="method" value="EM"/>
    <property type="resolution" value="3.10 A"/>
    <property type="chains" value="U=1-110"/>
</dbReference>
<dbReference type="PDB" id="8HSP">
    <property type="method" value="EM"/>
    <property type="resolution" value="2.32 A"/>
    <property type="chains" value="r=1-110"/>
</dbReference>
<dbReference type="PDB" id="8HTZ">
    <property type="method" value="EM"/>
    <property type="resolution" value="2.40 A"/>
    <property type="chains" value="r=1-110"/>
</dbReference>
<dbReference type="PDB" id="8HU1">
    <property type="method" value="EM"/>
    <property type="resolution" value="2.69 A"/>
    <property type="chains" value="r=1-110"/>
</dbReference>
<dbReference type="PDB" id="8IFB">
    <property type="method" value="EM"/>
    <property type="resolution" value="2.43 A"/>
    <property type="chains" value="r=1-110"/>
</dbReference>
<dbReference type="PDB" id="8IFC">
    <property type="method" value="EM"/>
    <property type="resolution" value="2.90 A"/>
    <property type="chains" value="r=1-110"/>
</dbReference>
<dbReference type="PDB" id="8J1Z">
    <property type="method" value="EM"/>
    <property type="resolution" value="2.60 A"/>
    <property type="chains" value="r=1-110"/>
</dbReference>
<dbReference type="PDB" id="8P16">
    <property type="method" value="EM"/>
    <property type="resolution" value="2.77 A"/>
    <property type="chains" value="S=1-110"/>
</dbReference>
<dbReference type="PDB" id="8P17">
    <property type="method" value="EM"/>
    <property type="resolution" value="2.78 A"/>
    <property type="chains" value="S=1-110"/>
</dbReference>
<dbReference type="PDB" id="8P18">
    <property type="method" value="EM"/>
    <property type="resolution" value="2.77 A"/>
    <property type="chains" value="S=1-110"/>
</dbReference>
<dbReference type="PDB" id="8PEG">
    <property type="method" value="EM"/>
    <property type="resolution" value="3.30 A"/>
    <property type="chains" value="v=1-110"/>
</dbReference>
<dbReference type="PDB" id="8PHJ">
    <property type="method" value="EM"/>
    <property type="resolution" value="3.67 A"/>
    <property type="chains" value="r=1-110"/>
</dbReference>
<dbReference type="PDB" id="8PKL">
    <property type="method" value="EM"/>
    <property type="resolution" value="3.09 A"/>
    <property type="chains" value="v=1-110"/>
</dbReference>
<dbReference type="PDB" id="8PVA">
    <property type="method" value="EM"/>
    <property type="resolution" value="4.50 A"/>
    <property type="chains" value="r=1-110"/>
</dbReference>
<dbReference type="PDB" id="8QBT">
    <property type="method" value="EM"/>
    <property type="resolution" value="2.20 A"/>
    <property type="chains" value="S=1-110"/>
</dbReference>
<dbReference type="PDB" id="8QK7">
    <property type="method" value="EM"/>
    <property type="resolution" value="2.77 A"/>
    <property type="chains" value="S=1-110"/>
</dbReference>
<dbReference type="PDB" id="8QOA">
    <property type="method" value="EM"/>
    <property type="resolution" value="2.00 A"/>
    <property type="chains" value="r=1-110"/>
</dbReference>
<dbReference type="PDB" id="8R6C">
    <property type="method" value="EM"/>
    <property type="resolution" value="2.20 A"/>
    <property type="chains" value="r=1-110"/>
</dbReference>
<dbReference type="PDB" id="8R8M">
    <property type="method" value="EM"/>
    <property type="resolution" value="2.40 A"/>
    <property type="chains" value="r=1-110"/>
</dbReference>
<dbReference type="PDB" id="8RPY">
    <property type="method" value="EM"/>
    <property type="resolution" value="2.64 A"/>
    <property type="chains" value="S=1-110"/>
</dbReference>
<dbReference type="PDB" id="8RPZ">
    <property type="method" value="EM"/>
    <property type="resolution" value="2.44 A"/>
    <property type="chains" value="S=1-110"/>
</dbReference>
<dbReference type="PDB" id="8RQ0">
    <property type="method" value="EM"/>
    <property type="resolution" value="2.44 A"/>
    <property type="chains" value="S=1-110"/>
</dbReference>
<dbReference type="PDB" id="8RQ2">
    <property type="method" value="EM"/>
    <property type="resolution" value="2.44 A"/>
    <property type="chains" value="S=1-110"/>
</dbReference>
<dbReference type="PDB" id="8SYL">
    <property type="method" value="EM"/>
    <property type="resolution" value="2.90 A"/>
    <property type="chains" value="U=1-110"/>
</dbReference>
<dbReference type="PDB" id="8T5D">
    <property type="method" value="EM"/>
    <property type="resolution" value="3.20 A"/>
    <property type="chains" value="S=1-110"/>
</dbReference>
<dbReference type="PDB" id="8T5H">
    <property type="method" value="EM"/>
    <property type="resolution" value="3.30 A"/>
    <property type="chains" value="S=1-110"/>
</dbReference>
<dbReference type="PDB" id="8UPO">
    <property type="method" value="EM"/>
    <property type="resolution" value="5.50 A"/>
    <property type="chains" value="1=1-110"/>
</dbReference>
<dbReference type="PDB" id="8UPR">
    <property type="method" value="EM"/>
    <property type="resolution" value="5.30 A"/>
    <property type="chains" value="1=1-110"/>
</dbReference>
<dbReference type="PDB" id="8UQL">
    <property type="method" value="EM"/>
    <property type="resolution" value="3.20 A"/>
    <property type="chains" value="1=1-110"/>
</dbReference>
<dbReference type="PDB" id="8UQM">
    <property type="method" value="EM"/>
    <property type="resolution" value="5.30 A"/>
    <property type="chains" value="1=1-110"/>
</dbReference>
<dbReference type="PDB" id="8UQP">
    <property type="method" value="EM"/>
    <property type="resolution" value="3.80 A"/>
    <property type="chains" value="1=1-110"/>
</dbReference>
<dbReference type="PDB" id="8UR0">
    <property type="method" value="EM"/>
    <property type="resolution" value="3.40 A"/>
    <property type="chains" value="1=1-110"/>
</dbReference>
<dbReference type="PDB" id="8URH">
    <property type="method" value="EM"/>
    <property type="resolution" value="5.70 A"/>
    <property type="chains" value="1=1-110"/>
</dbReference>
<dbReference type="PDB" id="8URI">
    <property type="method" value="EM"/>
    <property type="resolution" value="5.30 A"/>
    <property type="chains" value="1=1-110"/>
</dbReference>
<dbReference type="PDB" id="8URX">
    <property type="method" value="EM"/>
    <property type="resolution" value="6.60 A"/>
    <property type="chains" value="1=1-110"/>
</dbReference>
<dbReference type="PDB" id="8URY">
    <property type="method" value="EM"/>
    <property type="resolution" value="3.10 A"/>
    <property type="chains" value="1=1-110"/>
</dbReference>
<dbReference type="PDB" id="8VS9">
    <property type="method" value="EM"/>
    <property type="resolution" value="3.90 A"/>
    <property type="chains" value="L22=1-110"/>
</dbReference>
<dbReference type="PDB" id="8VSA">
    <property type="method" value="EM"/>
    <property type="resolution" value="3.70 A"/>
    <property type="chains" value="L22=1-110"/>
</dbReference>
<dbReference type="PDB" id="8W51">
    <property type="method" value="EM"/>
    <property type="resolution" value="2.40 A"/>
    <property type="chains" value="T=1-110"/>
</dbReference>
<dbReference type="PDB" id="8YUO">
    <property type="method" value="EM"/>
    <property type="resolution" value="2.25 A"/>
    <property type="chains" value="r=1-110"/>
</dbReference>
<dbReference type="PDB" id="8YUP">
    <property type="method" value="EM"/>
    <property type="resolution" value="2.39 A"/>
    <property type="chains" value="r=1-110"/>
</dbReference>
<dbReference type="PDB" id="8YUQ">
    <property type="method" value="EM"/>
    <property type="resolution" value="2.41 A"/>
    <property type="chains" value="r=1-110"/>
</dbReference>
<dbReference type="PDB" id="8YUR">
    <property type="method" value="EM"/>
    <property type="resolution" value="2.47 A"/>
    <property type="chains" value="r=1-110"/>
</dbReference>
<dbReference type="PDB" id="8YUS">
    <property type="method" value="EM"/>
    <property type="resolution" value="2.43 A"/>
    <property type="chains" value="r=1-110"/>
</dbReference>
<dbReference type="PDB" id="9AX7">
    <property type="method" value="EM"/>
    <property type="resolution" value="2.63 A"/>
    <property type="chains" value="r=1-110"/>
</dbReference>
<dbReference type="PDB" id="9AX8">
    <property type="method" value="EM"/>
    <property type="resolution" value="2.60 A"/>
    <property type="chains" value="S=1-110"/>
</dbReference>
<dbReference type="PDB" id="9CG5">
    <property type="method" value="EM"/>
    <property type="resolution" value="2.59 A"/>
    <property type="chains" value="r=1-110"/>
</dbReference>
<dbReference type="PDB" id="9CG6">
    <property type="method" value="EM"/>
    <property type="resolution" value="2.61 A"/>
    <property type="chains" value="r=1-110"/>
</dbReference>
<dbReference type="PDB" id="9CG7">
    <property type="method" value="EM"/>
    <property type="resolution" value="2.75 A"/>
    <property type="chains" value="r=1-110"/>
</dbReference>
<dbReference type="PDB" id="9CL9">
    <property type="method" value="EM"/>
    <property type="resolution" value="5.04 A"/>
    <property type="chains" value="S=1-110"/>
</dbReference>
<dbReference type="PDB" id="9D89">
    <property type="method" value="EM"/>
    <property type="resolution" value="1.95 A"/>
    <property type="chains" value="r=1-110"/>
</dbReference>
<dbReference type="PDB" id="9DYG">
    <property type="method" value="EM"/>
    <property type="resolution" value="5.27 A"/>
    <property type="chains" value="S=1-110"/>
</dbReference>
<dbReference type="PDB" id="9FBV">
    <property type="method" value="EM"/>
    <property type="resolution" value="2.40 A"/>
    <property type="chains" value="r=1-110"/>
</dbReference>
<dbReference type="PDB" id="9GFT">
    <property type="method" value="EM"/>
    <property type="resolution" value="3.10 A"/>
    <property type="chains" value="An/f=1-110"/>
</dbReference>
<dbReference type="PDB" id="9GGR">
    <property type="method" value="EM"/>
    <property type="resolution" value="3.20 A"/>
    <property type="chains" value="An/f=1-110"/>
</dbReference>
<dbReference type="PDB" id="9GR1">
    <property type="method" value="EM"/>
    <property type="resolution" value="3.17 A"/>
    <property type="chains" value="r=1-110"/>
</dbReference>
<dbReference type="PDB" id="9H3S">
    <property type="method" value="EM"/>
    <property type="resolution" value="4.16 A"/>
    <property type="chains" value="S=1-110"/>
</dbReference>
<dbReference type="PDB" id="9H3T">
    <property type="method" value="EM"/>
    <property type="resolution" value="3.85 A"/>
    <property type="chains" value="S=1-110"/>
</dbReference>
<dbReference type="PDB" id="9H3U">
    <property type="method" value="EM"/>
    <property type="resolution" value="3.47 A"/>
    <property type="chains" value="S=1-110"/>
</dbReference>
<dbReference type="PDB" id="9H3V">
    <property type="method" value="EM"/>
    <property type="resolution" value="3.55 A"/>
    <property type="chains" value="S=1-110"/>
</dbReference>
<dbReference type="PDB" id="9H3W">
    <property type="method" value="EM"/>
    <property type="resolution" value="5.38 A"/>
    <property type="chains" value="S=1-110"/>
</dbReference>
<dbReference type="PDB" id="9H3X">
    <property type="method" value="EM"/>
    <property type="resolution" value="4.12 A"/>
    <property type="chains" value="S=1-110"/>
</dbReference>
<dbReference type="PDB" id="9H3Y">
    <property type="method" value="EM"/>
    <property type="resolution" value="3.09 A"/>
    <property type="chains" value="S=1-110"/>
</dbReference>
<dbReference type="PDB" id="9H3Z">
    <property type="method" value="EM"/>
    <property type="resolution" value="2.98 A"/>
    <property type="chains" value="S=1-110"/>
</dbReference>
<dbReference type="PDB" id="9HA5">
    <property type="method" value="EM"/>
    <property type="resolution" value="3.30 A"/>
    <property type="chains" value="S=1-110"/>
</dbReference>
<dbReference type="PDB" id="9HA6">
    <property type="method" value="EM"/>
    <property type="resolution" value="3.08 A"/>
    <property type="chains" value="S=1-110"/>
</dbReference>
<dbReference type="PDB" id="9HAI">
    <property type="method" value="EM"/>
    <property type="resolution" value="3.01 A"/>
    <property type="chains" value="S=1-110"/>
</dbReference>
<dbReference type="PDB" id="9MOR">
    <property type="method" value="EM"/>
    <property type="resolution" value="2.65 A"/>
    <property type="chains" value="S=1-110"/>
</dbReference>
<dbReference type="PDB" id="9MQ4">
    <property type="method" value="EM"/>
    <property type="resolution" value="2.78 A"/>
    <property type="chains" value="S=1-110"/>
</dbReference>
<dbReference type="PDBsum" id="2J28"/>
<dbReference type="PDBsum" id="2RDO"/>
<dbReference type="PDBsum" id="3BBX"/>
<dbReference type="PDBsum" id="3J5L"/>
<dbReference type="PDBsum" id="3J7Z"/>
<dbReference type="PDBsum" id="3J8G"/>
<dbReference type="PDBsum" id="3J9Y"/>
<dbReference type="PDBsum" id="3J9Z"/>
<dbReference type="PDBsum" id="3JA1"/>
<dbReference type="PDBsum" id="3JBU"/>
<dbReference type="PDBsum" id="3JBV"/>
<dbReference type="PDBsum" id="3JCD"/>
<dbReference type="PDBsum" id="3JCE"/>
<dbReference type="PDBsum" id="3JCJ"/>
<dbReference type="PDBsum" id="3JCN"/>
<dbReference type="PDBsum" id="4CSU"/>
<dbReference type="PDBsum" id="4U1U"/>
<dbReference type="PDBsum" id="4U1V"/>
<dbReference type="PDBsum" id="4U20"/>
<dbReference type="PDBsum" id="4U24"/>
<dbReference type="PDBsum" id="4U25"/>
<dbReference type="PDBsum" id="4U26"/>
<dbReference type="PDBsum" id="4U27"/>
<dbReference type="PDBsum" id="4UY8"/>
<dbReference type="PDBsum" id="4V47"/>
<dbReference type="PDBsum" id="4V48"/>
<dbReference type="PDBsum" id="4V4H"/>
<dbReference type="PDBsum" id="4V4Q"/>
<dbReference type="PDBsum" id="4V4V"/>
<dbReference type="PDBsum" id="4V4W"/>
<dbReference type="PDBsum" id="4V50"/>
<dbReference type="PDBsum" id="4V52"/>
<dbReference type="PDBsum" id="4V53"/>
<dbReference type="PDBsum" id="4V54"/>
<dbReference type="PDBsum" id="4V55"/>
<dbReference type="PDBsum" id="4V56"/>
<dbReference type="PDBsum" id="4V57"/>
<dbReference type="PDBsum" id="4V5B"/>
<dbReference type="PDBsum" id="4V5H"/>
<dbReference type="PDBsum" id="4V5Y"/>
<dbReference type="PDBsum" id="4V64"/>
<dbReference type="PDBsum" id="4V65"/>
<dbReference type="PDBsum" id="4V66"/>
<dbReference type="PDBsum" id="4V69"/>
<dbReference type="PDBsum" id="4V6C"/>
<dbReference type="PDBsum" id="4V6D"/>
<dbReference type="PDBsum" id="4V6E"/>
<dbReference type="PDBsum" id="4V6K"/>
<dbReference type="PDBsum" id="4V6L"/>
<dbReference type="PDBsum" id="4V6M"/>
<dbReference type="PDBsum" id="4V6N"/>
<dbReference type="PDBsum" id="4V6O"/>
<dbReference type="PDBsum" id="4V6P"/>
<dbReference type="PDBsum" id="4V6Q"/>
<dbReference type="PDBsum" id="4V6R"/>
<dbReference type="PDBsum" id="4V6S"/>
<dbReference type="PDBsum" id="4V6T"/>
<dbReference type="PDBsum" id="4V6V"/>
<dbReference type="PDBsum" id="4V6Y"/>
<dbReference type="PDBsum" id="4V6Z"/>
<dbReference type="PDBsum" id="4V70"/>
<dbReference type="PDBsum" id="4V71"/>
<dbReference type="PDBsum" id="4V72"/>
<dbReference type="PDBsum" id="4V73"/>
<dbReference type="PDBsum" id="4V74"/>
<dbReference type="PDBsum" id="4V75"/>
<dbReference type="PDBsum" id="4V76"/>
<dbReference type="PDBsum" id="4V77"/>
<dbReference type="PDBsum" id="4V78"/>
<dbReference type="PDBsum" id="4V79"/>
<dbReference type="PDBsum" id="4V7A"/>
<dbReference type="PDBsum" id="4V7B"/>
<dbReference type="PDBsum" id="4V7C"/>
<dbReference type="PDBsum" id="4V7D"/>
<dbReference type="PDBsum" id="4V7I"/>
<dbReference type="PDBsum" id="4V7S"/>
<dbReference type="PDBsum" id="4V7T"/>
<dbReference type="PDBsum" id="4V7U"/>
<dbReference type="PDBsum" id="4V7V"/>
<dbReference type="PDBsum" id="4V85"/>
<dbReference type="PDBsum" id="4V89"/>
<dbReference type="PDBsum" id="4V9C"/>
<dbReference type="PDBsum" id="4V9D"/>
<dbReference type="PDBsum" id="4V9O"/>
<dbReference type="PDBsum" id="4V9P"/>
<dbReference type="PDBsum" id="4WF1"/>
<dbReference type="PDBsum" id="4WOI"/>
<dbReference type="PDBsum" id="4WWW"/>
<dbReference type="PDBsum" id="4YBB"/>
<dbReference type="PDBsum" id="5ADY"/>
<dbReference type="PDBsum" id="5AFI"/>
<dbReference type="PDBsum" id="5AKA"/>
<dbReference type="PDBsum" id="5GAD"/>
<dbReference type="PDBsum" id="5GAE"/>
<dbReference type="PDBsum" id="5GAF"/>
<dbReference type="PDBsum" id="5GAG"/>
<dbReference type="PDBsum" id="5GAH"/>
<dbReference type="PDBsum" id="5H5U"/>
<dbReference type="PDBsum" id="5IQR"/>
<dbReference type="PDBsum" id="5IT8"/>
<dbReference type="PDBsum" id="5J5B"/>
<dbReference type="PDBsum" id="5J7L"/>
<dbReference type="PDBsum" id="5J88"/>
<dbReference type="PDBsum" id="5J8A"/>
<dbReference type="PDBsum" id="5J91"/>
<dbReference type="PDBsum" id="5JC9"/>
<dbReference type="PDBsum" id="5JTE"/>
<dbReference type="PDBsum" id="5JU8"/>
<dbReference type="PDBsum" id="5KCR"/>
<dbReference type="PDBsum" id="5KCS"/>
<dbReference type="PDBsum" id="5KPS"/>
<dbReference type="PDBsum" id="5KPV"/>
<dbReference type="PDBsum" id="5KPW"/>
<dbReference type="PDBsum" id="5KPX"/>
<dbReference type="PDBsum" id="5L3P"/>
<dbReference type="PDBsum" id="5LZA"/>
<dbReference type="PDBsum" id="5LZB"/>
<dbReference type="PDBsum" id="5LZC"/>
<dbReference type="PDBsum" id="5LZD"/>
<dbReference type="PDBsum" id="5LZE"/>
<dbReference type="PDBsum" id="5LZF"/>
<dbReference type="PDBsum" id="5MDV"/>
<dbReference type="PDBsum" id="5MDW"/>
<dbReference type="PDBsum" id="5MDY"/>
<dbReference type="PDBsum" id="5MDZ"/>
<dbReference type="PDBsum" id="5MGP"/>
<dbReference type="PDBsum" id="5NCO"/>
<dbReference type="PDBsum" id="5NP6"/>
<dbReference type="PDBsum" id="5NWY"/>
<dbReference type="PDBsum" id="5O2R"/>
<dbReference type="PDBsum" id="5U4I"/>
<dbReference type="PDBsum" id="5U9F"/>
<dbReference type="PDBsum" id="5U9G"/>
<dbReference type="PDBsum" id="5UYK"/>
<dbReference type="PDBsum" id="5UYL"/>
<dbReference type="PDBsum" id="5UYM"/>
<dbReference type="PDBsum" id="5UYN"/>
<dbReference type="PDBsum" id="5UYP"/>
<dbReference type="PDBsum" id="5UYQ"/>
<dbReference type="PDBsum" id="5WDT"/>
<dbReference type="PDBsum" id="5WE4"/>
<dbReference type="PDBsum" id="5WE6"/>
<dbReference type="PDBsum" id="5WF0"/>
<dbReference type="PDBsum" id="5WFK"/>
<dbReference type="PDBsum" id="5WFS"/>
<dbReference type="PDBsum" id="6BU8"/>
<dbReference type="PDBsum" id="6BY1"/>
<dbReference type="PDBsum" id="6C4I"/>
<dbReference type="PDBsum" id="6DNC"/>
<dbReference type="PDBsum" id="6ENF"/>
<dbReference type="PDBsum" id="6ENJ"/>
<dbReference type="PDBsum" id="6ENU"/>
<dbReference type="PDBsum" id="6GBZ"/>
<dbReference type="PDBsum" id="6GC0"/>
<dbReference type="PDBsum" id="6GC4"/>
<dbReference type="PDBsum" id="6GC6"/>
<dbReference type="PDBsum" id="6GC7"/>
<dbReference type="PDBsum" id="6GC8"/>
<dbReference type="PDBsum" id="6GWT"/>
<dbReference type="PDBsum" id="6GXM"/>
<dbReference type="PDBsum" id="6GXN"/>
<dbReference type="PDBsum" id="6GXO"/>
<dbReference type="PDBsum" id="6GXP"/>
<dbReference type="PDBsum" id="6H4N"/>
<dbReference type="PDBsum" id="6H58"/>
<dbReference type="PDBsum" id="6HRM"/>
<dbReference type="PDBsum" id="6I0Y"/>
<dbReference type="PDBsum" id="6I7V"/>
<dbReference type="PDBsum" id="6O9J"/>
<dbReference type="PDBsum" id="6O9K"/>
<dbReference type="PDBsum" id="6OFX"/>
<dbReference type="PDBsum" id="6OG7"/>
<dbReference type="PDBsum" id="6OGF"/>
<dbReference type="PDBsum" id="6OGG"/>
<dbReference type="PDBsum" id="6OGI"/>
<dbReference type="PDBsum" id="6OM6"/>
<dbReference type="PDBsum" id="6ORE"/>
<dbReference type="PDBsum" id="6ORL"/>
<dbReference type="PDBsum" id="6OSK"/>
<dbReference type="PDBsum" id="6OSQ"/>
<dbReference type="PDBsum" id="6OST"/>
<dbReference type="PDBsum" id="6OT3"/>
<dbReference type="PDBsum" id="6OUO"/>
<dbReference type="PDBsum" id="6PJ6"/>
<dbReference type="PDBsum" id="6Q98"/>
<dbReference type="PDBsum" id="6Q9A"/>
<dbReference type="PDBsum" id="6QDW"/>
<dbReference type="PDBsum" id="6QUL"/>
<dbReference type="PDBsum" id="6S0K"/>
<dbReference type="PDBsum" id="6SZS"/>
<dbReference type="PDBsum" id="6TBV"/>
<dbReference type="PDBsum" id="6TC3"/>
<dbReference type="PDBsum" id="6U48"/>
<dbReference type="PDBsum" id="6VU3"/>
<dbReference type="PDBsum" id="6VWL"/>
<dbReference type="PDBsum" id="6VWM"/>
<dbReference type="PDBsum" id="6VWN"/>
<dbReference type="PDBsum" id="6VYQ"/>
<dbReference type="PDBsum" id="6VYR"/>
<dbReference type="PDBsum" id="6VYS"/>
<dbReference type="PDBsum" id="6VYT"/>
<dbReference type="PDBsum" id="6VYU"/>
<dbReference type="PDBsum" id="6VYW"/>
<dbReference type="PDBsum" id="6VYX"/>
<dbReference type="PDBsum" id="6VYY"/>
<dbReference type="PDBsum" id="6VYZ"/>
<dbReference type="PDBsum" id="6VZ2"/>
<dbReference type="PDBsum" id="6VZ3"/>
<dbReference type="PDBsum" id="6VZ5"/>
<dbReference type="PDBsum" id="6VZ7"/>
<dbReference type="PDBsum" id="6VZJ"/>
<dbReference type="PDBsum" id="6WD0"/>
<dbReference type="PDBsum" id="6WD1"/>
<dbReference type="PDBsum" id="6WD2"/>
<dbReference type="PDBsum" id="6WD3"/>
<dbReference type="PDBsum" id="6WD4"/>
<dbReference type="PDBsum" id="6WD5"/>
<dbReference type="PDBsum" id="6WD6"/>
<dbReference type="PDBsum" id="6WD7"/>
<dbReference type="PDBsum" id="6WD8"/>
<dbReference type="PDBsum" id="6WD9"/>
<dbReference type="PDBsum" id="6WDA"/>
<dbReference type="PDBsum" id="6WDB"/>
<dbReference type="PDBsum" id="6WDC"/>
<dbReference type="PDBsum" id="6WDD"/>
<dbReference type="PDBsum" id="6WDE"/>
<dbReference type="PDBsum" id="6WDF"/>
<dbReference type="PDBsum" id="6WDG"/>
<dbReference type="PDBsum" id="6WDH"/>
<dbReference type="PDBsum" id="6WDI"/>
<dbReference type="PDBsum" id="6WDJ"/>
<dbReference type="PDBsum" id="6WDK"/>
<dbReference type="PDBsum" id="6WDL"/>
<dbReference type="PDBsum" id="6WDM"/>
<dbReference type="PDBsum" id="6WNT"/>
<dbReference type="PDBsum" id="6WNV"/>
<dbReference type="PDBsum" id="6WNW"/>
<dbReference type="PDBsum" id="6X6T"/>
<dbReference type="PDBsum" id="6X7F"/>
<dbReference type="PDBsum" id="6X7K"/>
<dbReference type="PDBsum" id="6X9Q"/>
<dbReference type="PDBsum" id="6XDQ"/>
<dbReference type="PDBsum" id="6XDR"/>
<dbReference type="PDBsum" id="6XGF"/>
<dbReference type="PDBsum" id="6XII"/>
<dbReference type="PDBsum" id="6XIJ"/>
<dbReference type="PDBsum" id="6XZ7"/>
<dbReference type="PDBsum" id="6XZA"/>
<dbReference type="PDBsum" id="6XZB"/>
<dbReference type="PDBsum" id="6Y69"/>
<dbReference type="PDBsum" id="6YS3"/>
<dbReference type="PDBsum" id="6YSR"/>
<dbReference type="PDBsum" id="6YSS"/>
<dbReference type="PDBsum" id="6YST"/>
<dbReference type="PDBsum" id="6YSU"/>
<dbReference type="PDBsum" id="6ZTJ"/>
<dbReference type="PDBsum" id="6ZTL"/>
<dbReference type="PDBsum" id="6ZTM"/>
<dbReference type="PDBsum" id="6ZTN"/>
<dbReference type="PDBsum" id="6ZTO"/>
<dbReference type="PDBsum" id="6ZTP"/>
<dbReference type="PDBsum" id="6ZU1"/>
<dbReference type="PDBsum" id="7ABZ"/>
<dbReference type="PDBsum" id="7AC7"/>
<dbReference type="PDBsum" id="7ACJ"/>
<dbReference type="PDBsum" id="7ACR"/>
<dbReference type="PDBsum" id="7B5K"/>
<dbReference type="PDBsum" id="7BL2"/>
<dbReference type="PDBsum" id="7BL3"/>
<dbReference type="PDBsum" id="7BL4"/>
<dbReference type="PDBsum" id="7BL5"/>
<dbReference type="PDBsum" id="7BL6"/>
<dbReference type="PDBsum" id="7BV8"/>
<dbReference type="PDBsum" id="7D6Z"/>
<dbReference type="PDBsum" id="7D80"/>
<dbReference type="PDBsum" id="7JSS"/>
<dbReference type="PDBsum" id="7JSW"/>
<dbReference type="PDBsum" id="7JSZ"/>
<dbReference type="PDBsum" id="7JT1"/>
<dbReference type="PDBsum" id="7JT2"/>
<dbReference type="PDBsum" id="7JT3"/>
<dbReference type="PDBsum" id="7K00"/>
<dbReference type="PDBsum" id="7K50"/>
<dbReference type="PDBsum" id="7K51"/>
<dbReference type="PDBsum" id="7K52"/>
<dbReference type="PDBsum" id="7K53"/>
<dbReference type="PDBsum" id="7K54"/>
<dbReference type="PDBsum" id="7K55"/>
<dbReference type="PDBsum" id="7LV0"/>
<dbReference type="PDBsum" id="7LVK"/>
<dbReference type="PDBsum" id="7M5D"/>
<dbReference type="PDBsum" id="7N1P"/>
<dbReference type="PDBsum" id="7N2C"/>
<dbReference type="PDBsum" id="7N2U"/>
<dbReference type="PDBsum" id="7N2V"/>
<dbReference type="PDBsum" id="7N30"/>
<dbReference type="PDBsum" id="7N31"/>
<dbReference type="PDBsum" id="7NBU"/>
<dbReference type="PDBsum" id="7NSO"/>
<dbReference type="PDBsum" id="7NSP"/>
<dbReference type="PDBsum" id="7NSQ"/>
<dbReference type="PDBsum" id="7NWT"/>
<dbReference type="PDBsum" id="7NWW"/>
<dbReference type="PDBsum" id="7O19"/>
<dbReference type="PDBsum" id="7O1A"/>
<dbReference type="PDBsum" id="7O1C"/>
<dbReference type="PDBsum" id="7ODE"/>
<dbReference type="PDBsum" id="7OIF"/>
<dbReference type="PDBsum" id="7OIG"/>
<dbReference type="PDBsum" id="7OII"/>
<dbReference type="PDBsum" id="7OIZ"/>
<dbReference type="PDBsum" id="7OJ0"/>
<dbReference type="PDBsum" id="7OT5"/>
<dbReference type="PDBsum" id="7P3K"/>
<dbReference type="PDBsum" id="7PJS"/>
<dbReference type="PDBsum" id="7PJT"/>
<dbReference type="PDBsum" id="7PJU"/>
<dbReference type="PDBsum" id="7PJV"/>
<dbReference type="PDBsum" id="7PJW"/>
<dbReference type="PDBsum" id="7PJX"/>
<dbReference type="PDBsum" id="7PJY"/>
<dbReference type="PDBsum" id="7PJZ"/>
<dbReference type="PDBsum" id="7Q4K"/>
<dbReference type="PDBsum" id="7QG8"/>
<dbReference type="PDBsum" id="7QGH"/>
<dbReference type="PDBsum" id="7QGN"/>
<dbReference type="PDBsum" id="7QGR"/>
<dbReference type="PDBsum" id="7QQ3"/>
<dbReference type="PDBsum" id="7S1G"/>
<dbReference type="PDBsum" id="7S1H"/>
<dbReference type="PDBsum" id="7S1I"/>
<dbReference type="PDBsum" id="7S1J"/>
<dbReference type="PDBsum" id="7S1K"/>
<dbReference type="PDBsum" id="7SA4"/>
<dbReference type="PDBsum" id="7SS9"/>
<dbReference type="PDBsum" id="7SSD"/>
<dbReference type="PDBsum" id="7SSL"/>
<dbReference type="PDBsum" id="7SSN"/>
<dbReference type="PDBsum" id="7SSO"/>
<dbReference type="PDBsum" id="7SSW"/>
<dbReference type="PDBsum" id="7ST2"/>
<dbReference type="PDBsum" id="7ST6"/>
<dbReference type="PDBsum" id="7ST7"/>
<dbReference type="PDBsum" id="7TOS"/>
<dbReference type="PDBsum" id="7UG7"/>
<dbReference type="PDBsum" id="7UPH"/>
<dbReference type="PDBsum" id="7Y7C"/>
<dbReference type="PDBsum" id="7Y7D"/>
<dbReference type="PDBsum" id="7Y7E"/>
<dbReference type="PDBsum" id="7Y7F"/>
<dbReference type="PDBsum" id="7Y7G"/>
<dbReference type="PDBsum" id="7Y7H"/>
<dbReference type="PDBsum" id="7YLA"/>
<dbReference type="PDBsum" id="7Z20"/>
<dbReference type="PDBsum" id="7ZOD"/>
<dbReference type="PDBsum" id="7ZP8"/>
<dbReference type="PDBsum" id="7ZQ5"/>
<dbReference type="PDBsum" id="7ZQ6"/>
<dbReference type="PDBsum" id="7ZTA"/>
<dbReference type="PDBsum" id="8A3L"/>
<dbReference type="PDBsum" id="8AKN"/>
<dbReference type="PDBsum" id="8AM9"/>
<dbReference type="PDBsum" id="8ANA"/>
<dbReference type="PDBsum" id="8AP4"/>
<dbReference type="PDBsum" id="8AYE"/>
<dbReference type="PDBsum" id="8B0X"/>
<dbReference type="PDBsum" id="8B7Y"/>
<dbReference type="PDBsum" id="8BF7"/>
<dbReference type="PDBsum" id="8BGE"/>
<dbReference type="PDBsum" id="8BGH"/>
<dbReference type="PDBsum" id="8BH4"/>
<dbReference type="PDBsum" id="8BHJ"/>
<dbReference type="PDBsum" id="8BHL"/>
<dbReference type="PDBsum" id="8BHN"/>
<dbReference type="PDBsum" id="8BHP"/>
<dbReference type="PDBsum" id="8BIL"/>
<dbReference type="PDBsum" id="8BIM"/>
<dbReference type="PDBsum" id="8C8X"/>
<dbReference type="PDBsum" id="8C8Y"/>
<dbReference type="PDBsum" id="8C8Z"/>
<dbReference type="PDBsum" id="8C90"/>
<dbReference type="PDBsum" id="8C91"/>
<dbReference type="PDBsum" id="8C92"/>
<dbReference type="PDBsum" id="8C93"/>
<dbReference type="PDBsum" id="8C94"/>
<dbReference type="PDBsum" id="8C95"/>
<dbReference type="PDBsum" id="8C96"/>
<dbReference type="PDBsum" id="8C97"/>
<dbReference type="PDBsum" id="8C98"/>
<dbReference type="PDBsum" id="8C99"/>
<dbReference type="PDBsum" id="8C9A"/>
<dbReference type="PDBsum" id="8C9B"/>
<dbReference type="PDBsum" id="8C9C"/>
<dbReference type="PDBsum" id="8CAM"/>
<dbReference type="PDBsum" id="8CEU"/>
<dbReference type="PDBsum" id="8CGD"/>
<dbReference type="PDBsum" id="8CGK"/>
<dbReference type="PDBsum" id="8CGV"/>
<dbReference type="PDBsum" id="8E30"/>
<dbReference type="PDBsum" id="8E32"/>
<dbReference type="PDBsum" id="8E33"/>
<dbReference type="PDBsum" id="8E35"/>
<dbReference type="PDBsum" id="8E36"/>
<dbReference type="PDBsum" id="8E3L"/>
<dbReference type="PDBsum" id="8E3M"/>
<dbReference type="PDBsum" id="8E3O"/>
<dbReference type="PDBsum" id="8E41"/>
<dbReference type="PDBsum" id="8E42"/>
<dbReference type="PDBsum" id="8E43"/>
<dbReference type="PDBsum" id="8E44"/>
<dbReference type="PDBsum" id="8E45"/>
<dbReference type="PDBsum" id="8E46"/>
<dbReference type="PDBsum" id="8E47"/>
<dbReference type="PDBsum" id="8E48"/>
<dbReference type="PDBsum" id="8E49"/>
<dbReference type="PDBsum" id="8EIU"/>
<dbReference type="PDBsum" id="8EKC"/>
<dbReference type="PDBsum" id="8EMM"/>
<dbReference type="PDBsum" id="8FIZ"/>
<dbReference type="PDBsum" id="8FTO"/>
<dbReference type="PDBsum" id="8FZD"/>
<dbReference type="PDBsum" id="8FZE"/>
<dbReference type="PDBsum" id="8FZF"/>
<dbReference type="PDBsum" id="8FZG"/>
<dbReference type="PDBsum" id="8FZH"/>
<dbReference type="PDBsum" id="8FZI"/>
<dbReference type="PDBsum" id="8FZJ"/>
<dbReference type="PDBsum" id="8G2U"/>
<dbReference type="PDBsum" id="8G31"/>
<dbReference type="PDBsum" id="8G34"/>
<dbReference type="PDBsum" id="8G38"/>
<dbReference type="PDBsum" id="8G6W"/>
<dbReference type="PDBsum" id="8G6X"/>
<dbReference type="PDBsum" id="8G6Y"/>
<dbReference type="PDBsum" id="8G7P"/>
<dbReference type="PDBsum" id="8G7Q"/>
<dbReference type="PDBsum" id="8G7R"/>
<dbReference type="PDBsum" id="8G7S"/>
<dbReference type="PDBsum" id="8HSP"/>
<dbReference type="PDBsum" id="8HTZ"/>
<dbReference type="PDBsum" id="8HU1"/>
<dbReference type="PDBsum" id="8IFB"/>
<dbReference type="PDBsum" id="8IFC"/>
<dbReference type="PDBsum" id="8J1Z"/>
<dbReference type="PDBsum" id="8P16"/>
<dbReference type="PDBsum" id="8P17"/>
<dbReference type="PDBsum" id="8P18"/>
<dbReference type="PDBsum" id="8PEG"/>
<dbReference type="PDBsum" id="8PHJ"/>
<dbReference type="PDBsum" id="8PKL"/>
<dbReference type="PDBsum" id="8PVA"/>
<dbReference type="PDBsum" id="8QBT"/>
<dbReference type="PDBsum" id="8QK7"/>
<dbReference type="PDBsum" id="8QOA"/>
<dbReference type="PDBsum" id="8R6C"/>
<dbReference type="PDBsum" id="8R8M"/>
<dbReference type="PDBsum" id="8RPY"/>
<dbReference type="PDBsum" id="8RPZ"/>
<dbReference type="PDBsum" id="8RQ0"/>
<dbReference type="PDBsum" id="8RQ2"/>
<dbReference type="PDBsum" id="8SYL"/>
<dbReference type="PDBsum" id="8T5D"/>
<dbReference type="PDBsum" id="8T5H"/>
<dbReference type="PDBsum" id="8UPO"/>
<dbReference type="PDBsum" id="8UPR"/>
<dbReference type="PDBsum" id="8UQL"/>
<dbReference type="PDBsum" id="8UQM"/>
<dbReference type="PDBsum" id="8UQP"/>
<dbReference type="PDBsum" id="8UR0"/>
<dbReference type="PDBsum" id="8URH"/>
<dbReference type="PDBsum" id="8URI"/>
<dbReference type="PDBsum" id="8URX"/>
<dbReference type="PDBsum" id="8URY"/>
<dbReference type="PDBsum" id="8VS9"/>
<dbReference type="PDBsum" id="8VSA"/>
<dbReference type="PDBsum" id="8W51"/>
<dbReference type="PDBsum" id="8YUO"/>
<dbReference type="PDBsum" id="8YUP"/>
<dbReference type="PDBsum" id="8YUQ"/>
<dbReference type="PDBsum" id="8YUR"/>
<dbReference type="PDBsum" id="8YUS"/>
<dbReference type="PDBsum" id="9AX7"/>
<dbReference type="PDBsum" id="9AX8"/>
<dbReference type="PDBsum" id="9CG5"/>
<dbReference type="PDBsum" id="9CG6"/>
<dbReference type="PDBsum" id="9CG7"/>
<dbReference type="PDBsum" id="9CL9"/>
<dbReference type="PDBsum" id="9D89"/>
<dbReference type="PDBsum" id="9DYG"/>
<dbReference type="PDBsum" id="9FBV"/>
<dbReference type="PDBsum" id="9GFT"/>
<dbReference type="PDBsum" id="9GGR"/>
<dbReference type="PDBsum" id="9GR1"/>
<dbReference type="PDBsum" id="9H3S"/>
<dbReference type="PDBsum" id="9H3T"/>
<dbReference type="PDBsum" id="9H3U"/>
<dbReference type="PDBsum" id="9H3V"/>
<dbReference type="PDBsum" id="9H3W"/>
<dbReference type="PDBsum" id="9H3X"/>
<dbReference type="PDBsum" id="9H3Y"/>
<dbReference type="PDBsum" id="9H3Z"/>
<dbReference type="PDBsum" id="9HA5"/>
<dbReference type="PDBsum" id="9HA6"/>
<dbReference type="PDBsum" id="9HAI"/>
<dbReference type="PDBsum" id="9MOR"/>
<dbReference type="PDBsum" id="9MQ4"/>
<dbReference type="EMDB" id="EMD-0076"/>
<dbReference type="EMDB" id="EMD-0080"/>
<dbReference type="EMDB" id="EMD-0081"/>
<dbReference type="EMDB" id="EMD-0082"/>
<dbReference type="EMDB" id="EMD-0083"/>
<dbReference type="EMDB" id="EMD-0137"/>
<dbReference type="EMDB" id="EMD-0139"/>
<dbReference type="EMDB" id="EMD-0261"/>
<dbReference type="EMDB" id="EMD-0322"/>
<dbReference type="EMDB" id="EMD-10073"/>
<dbReference type="EMDB" id="EMD-10353"/>
<dbReference type="EMDB" id="EMD-10453"/>
<dbReference type="EMDB" id="EMD-10458"/>
<dbReference type="EMDB" id="EMD-10655"/>
<dbReference type="EMDB" id="EMD-10656"/>
<dbReference type="EMDB" id="EMD-10657"/>
<dbReference type="EMDB" id="EMD-10705"/>
<dbReference type="EMDB" id="EMD-10905"/>
<dbReference type="EMDB" id="EMD-10906"/>
<dbReference type="EMDB" id="EMD-10907"/>
<dbReference type="EMDB" id="EMD-10908"/>
<dbReference type="EMDB" id="EMD-11418"/>
<dbReference type="EMDB" id="EMD-11419"/>
<dbReference type="EMDB" id="EMD-11420"/>
<dbReference type="EMDB" id="EMD-11421"/>
<dbReference type="EMDB" id="EMD-11422"/>
<dbReference type="EMDB" id="EMD-11423"/>
<dbReference type="EMDB" id="EMD-11426"/>
<dbReference type="EMDB" id="EMD-11710"/>
<dbReference type="EMDB" id="EMD-11713"/>
<dbReference type="EMDB" id="EMD-11717"/>
<dbReference type="EMDB" id="EMD-11718"/>
<dbReference type="EMDB" id="EMD-12035"/>
<dbReference type="EMDB" id="EMD-12215"/>
<dbReference type="EMDB" id="EMD-12216"/>
<dbReference type="EMDB" id="EMD-12217"/>
<dbReference type="EMDB" id="EMD-12218"/>
<dbReference type="EMDB" id="EMD-12219"/>
<dbReference type="EMDB" id="EMD-12261"/>
<dbReference type="EMDB" id="EMD-12573"/>
<dbReference type="EMDB" id="EMD-12574"/>
<dbReference type="EMDB" id="EMD-12575"/>
<dbReference type="EMDB" id="EMD-12635"/>
<dbReference type="EMDB" id="EMD-12636"/>
<dbReference type="EMDB" id="EMD-12693"/>
<dbReference type="EMDB" id="EMD-12694"/>
<dbReference type="EMDB" id="EMD-12695"/>
<dbReference type="EMDB" id="EMD-12826"/>
<dbReference type="EMDB" id="EMD-12928"/>
<dbReference type="EMDB" id="EMD-12929"/>
<dbReference type="EMDB" id="EMD-12930"/>
<dbReference type="EMDB" id="EMD-12936"/>
<dbReference type="EMDB" id="EMD-12937"/>
<dbReference type="EMDB" id="EMD-13055"/>
<dbReference type="EMDB" id="EMD-13180"/>
<dbReference type="EMDB" id="EMD-13458"/>
<dbReference type="EMDB" id="EMD-13459"/>
<dbReference type="EMDB" id="EMD-13461"/>
<dbReference type="EMDB" id="EMD-13462"/>
<dbReference type="EMDB" id="EMD-13463"/>
<dbReference type="EMDB" id="EMD-13464"/>
<dbReference type="EMDB" id="EMD-13465"/>
<dbReference type="EMDB" id="EMD-13805"/>
<dbReference type="EMDB" id="EMD-13952"/>
<dbReference type="EMDB" id="EMD-13955"/>
<dbReference type="EMDB" id="EMD-13956"/>
<dbReference type="EMDB" id="EMD-13958"/>
<dbReference type="EMDB" id="EMD-14121"/>
<dbReference type="EMDB" id="EMD-14454"/>
<dbReference type="EMDB" id="EMD-14846"/>
<dbReference type="EMDB" id="EMD-14850"/>
<dbReference type="EMDB" id="EMD-14864"/>
<dbReference type="EMDB" id="EMD-14865"/>
<dbReference type="EMDB" id="EMD-14956"/>
<dbReference type="EMDB" id="EMD-15116"/>
<dbReference type="EMDB" id="EMD-15558"/>
<dbReference type="EMDB" id="EMD-15712"/>
<dbReference type="EMDB" id="EMD-15793"/>
<dbReference type="EMDB" id="EMD-15905"/>
<dbReference type="EMDB" id="EMD-16015"/>
<dbReference type="EMDB" id="EMD-16029"/>
<dbReference type="EMDB" id="EMD-16031"/>
<dbReference type="EMDB" id="EMD-16047"/>
<dbReference type="EMDB" id="EMD-16057"/>
<dbReference type="EMDB" id="EMD-16059"/>
<dbReference type="EMDB" id="EMD-16062"/>
<dbReference type="EMDB" id="EMD-16065"/>
<dbReference type="EMDB" id="EMD-16081"/>
<dbReference type="EMDB" id="EMD-16082"/>
<dbReference type="EMDB" id="EMD-16494"/>
<dbReference type="EMDB" id="EMD-16495"/>
<dbReference type="EMDB" id="EMD-16496"/>
<dbReference type="EMDB" id="EMD-16497"/>
<dbReference type="EMDB" id="EMD-16498"/>
<dbReference type="EMDB" id="EMD-16499"/>
<dbReference type="EMDB" id="EMD-16500"/>
<dbReference type="EMDB" id="EMD-16501"/>
<dbReference type="EMDB" id="EMD-16502"/>
<dbReference type="EMDB" id="EMD-16503"/>
<dbReference type="EMDB" id="EMD-16504"/>
<dbReference type="EMDB" id="EMD-16505"/>
<dbReference type="EMDB" id="EMD-16506"/>
<dbReference type="EMDB" id="EMD-16507"/>
<dbReference type="EMDB" id="EMD-16508"/>
<dbReference type="EMDB" id="EMD-16509"/>
<dbReference type="EMDB" id="EMD-16530"/>
<dbReference type="EMDB" id="EMD-16613"/>
<dbReference type="EMDB" id="EMD-16641"/>
<dbReference type="EMDB" id="EMD-16646"/>
<dbReference type="EMDB" id="EMD-16652"/>
<dbReference type="EMDB" id="EMD-17346"/>
<dbReference type="EMDB" id="EMD-17347"/>
<dbReference type="EMDB" id="EMD-17348"/>
<dbReference type="EMDB" id="EMD-17631"/>
<dbReference type="EMDB" id="EMD-17667"/>
<dbReference type="EMDB" id="EMD-17743"/>
<dbReference type="EMDB" id="EMD-17959"/>
<dbReference type="EMDB" id="EMD-18320"/>
<dbReference type="EMDB" id="EMD-18458"/>
<dbReference type="EMDB" id="EMD-18534"/>
<dbReference type="EMDB" id="EMD-18950"/>
<dbReference type="EMDB" id="EMD-19004"/>
<dbReference type="EMDB" id="EMD-19426"/>
<dbReference type="EMDB" id="EMD-19427"/>
<dbReference type="EMDB" id="EMD-19428"/>
<dbReference type="EMDB" id="EMD-19429"/>
<dbReference type="EMDB" id="EMD-20048"/>
<dbReference type="EMDB" id="EMD-20052"/>
<dbReference type="EMDB" id="EMD-21420"/>
<dbReference type="EMDB" id="EMD-21421"/>
<dbReference type="EMDB" id="EMD-21422"/>
<dbReference type="EMDB" id="EMD-21625"/>
<dbReference type="EMDB" id="EMD-21630"/>
<dbReference type="EMDB" id="EMD-21631"/>
<dbReference type="EMDB" id="EMD-21632"/>
<dbReference type="EMDB" id="EMD-21633"/>
<dbReference type="EMDB" id="EMD-21634"/>
<dbReference type="EMDB" id="EMD-21635"/>
<dbReference type="EMDB" id="EMD-21636"/>
<dbReference type="EMDB" id="EMD-21637"/>
<dbReference type="EMDB" id="EMD-21638"/>
<dbReference type="EMDB" id="EMD-21639"/>
<dbReference type="EMDB" id="EMD-21640"/>
<dbReference type="EMDB" id="EMD-21641"/>
<dbReference type="EMDB" id="EMD-21856"/>
<dbReference type="EMDB" id="EMD-21857"/>
<dbReference type="EMDB" id="EMD-21858"/>
<dbReference type="EMDB" id="EMD-22459"/>
<dbReference type="EMDB" id="EMD-22461"/>
<dbReference type="EMDB" id="EMD-22464"/>
<dbReference type="EMDB" id="EMD-22466"/>
<dbReference type="EMDB" id="EMD-22469"/>
<dbReference type="EMDB" id="EMD-22472"/>
<dbReference type="EMDB" id="EMD-22669"/>
<dbReference type="EMDB" id="EMD-22670"/>
<dbReference type="EMDB" id="EMD-22671"/>
<dbReference type="EMDB" id="EMD-22672"/>
<dbReference type="EMDB" id="EMD-22673"/>
<dbReference type="EMDB" id="EMD-22674"/>
<dbReference type="EMDB" id="EMD-23528"/>
<dbReference type="EMDB" id="EMD-24120"/>
<dbReference type="EMDB" id="EMD-24132"/>
<dbReference type="EMDB" id="EMD-24133"/>
<dbReference type="EMDB" id="EMD-24134"/>
<dbReference type="EMDB" id="EMD-24135"/>
<dbReference type="EMDB" id="EMD-24136"/>
<dbReference type="EMDB" id="EMD-24803"/>
<dbReference type="EMDB" id="EMD-25405"/>
<dbReference type="EMDB" id="EMD-25407"/>
<dbReference type="EMDB" id="EMD-25409"/>
<dbReference type="EMDB" id="EMD-25410"/>
<dbReference type="EMDB" id="EMD-25411"/>
<dbReference type="EMDB" id="EMD-25415"/>
<dbReference type="EMDB" id="EMD-25418"/>
<dbReference type="EMDB" id="EMD-25420"/>
<dbReference type="EMDB" id="EMD-25421"/>
<dbReference type="EMDB" id="EMD-26037"/>
<dbReference type="EMDB" id="EMD-26486"/>
<dbReference type="EMDB" id="EMD-26666"/>
<dbReference type="EMDB" id="EMD-27852"/>
<dbReference type="EMDB" id="EMD-27854"/>
<dbReference type="EMDB" id="EMD-27855"/>
<dbReference type="EMDB" id="EMD-27857"/>
<dbReference type="EMDB" id="EMD-27858"/>
<dbReference type="EMDB" id="EMD-27867"/>
<dbReference type="EMDB" id="EMD-27868"/>
<dbReference type="EMDB" id="EMD-27869"/>
<dbReference type="EMDB" id="EMD-27876"/>
<dbReference type="EMDB" id="EMD-27877"/>
<dbReference type="EMDB" id="EMD-27878"/>
<dbReference type="EMDB" id="EMD-27879"/>
<dbReference type="EMDB" id="EMD-27880"/>
<dbReference type="EMDB" id="EMD-27881"/>
<dbReference type="EMDB" id="EMD-27882"/>
<dbReference type="EMDB" id="EMD-27883"/>
<dbReference type="EMDB" id="EMD-27884"/>
<dbReference type="EMDB" id="EMD-28165"/>
<dbReference type="EMDB" id="EMD-28197"/>
<dbReference type="EMDB" id="EMD-28254"/>
<dbReference type="EMDB" id="EMD-29214"/>
<dbReference type="EMDB" id="EMD-29449"/>
<dbReference type="EMDB" id="EMD-29620"/>
<dbReference type="EMDB" id="EMD-29621"/>
<dbReference type="EMDB" id="EMD-29624"/>
<dbReference type="EMDB" id="EMD-29627"/>
<dbReference type="EMDB" id="EMD-29628"/>
<dbReference type="EMDB" id="EMD-29631"/>
<dbReference type="EMDB" id="EMD-29634"/>
<dbReference type="EMDB" id="EMD-29681"/>
<dbReference type="EMDB" id="EMD-29687"/>
<dbReference type="EMDB" id="EMD-29688"/>
<dbReference type="EMDB" id="EMD-29689"/>
<dbReference type="EMDB" id="EMD-29786"/>
<dbReference type="EMDB" id="EMD-29787"/>
<dbReference type="EMDB" id="EMD-29788"/>
<dbReference type="EMDB" id="EMD-29819"/>
<dbReference type="EMDB" id="EMD-29820"/>
<dbReference type="EMDB" id="EMD-29821"/>
<dbReference type="EMDB" id="EMD-29822"/>
<dbReference type="EMDB" id="EMD-30215"/>
<dbReference type="EMDB" id="EMD-30598"/>
<dbReference type="EMDB" id="EMD-30611"/>
<dbReference type="EMDB" id="EMD-33660"/>
<dbReference type="EMDB" id="EMD-33661"/>
<dbReference type="EMDB" id="EMD-33662"/>
<dbReference type="EMDB" id="EMD-33663"/>
<dbReference type="EMDB" id="EMD-33664"/>
<dbReference type="EMDB" id="EMD-33665"/>
<dbReference type="EMDB" id="EMD-33904"/>
<dbReference type="EMDB" id="EMD-3489"/>
<dbReference type="EMDB" id="EMD-3490"/>
<dbReference type="EMDB" id="EMD-3492"/>
<dbReference type="EMDB" id="EMD-3493"/>
<dbReference type="EMDB" id="EMD-35001"/>
<dbReference type="EMDB" id="EMD-35020"/>
<dbReference type="EMDB" id="EMD-35022"/>
<dbReference type="EMDB" id="EMD-3508"/>
<dbReference type="EMDB" id="EMD-35411"/>
<dbReference type="EMDB" id="EMD-35412"/>
<dbReference type="EMDB" id="EMD-35939"/>
<dbReference type="EMDB" id="EMD-3617"/>
<dbReference type="EMDB" id="EMD-3713"/>
<dbReference type="EMDB" id="EMD-37271"/>
<dbReference type="EMDB" id="EMD-3730"/>
<dbReference type="EMDB" id="EMD-3898"/>
<dbReference type="EMDB" id="EMD-3899"/>
<dbReference type="EMDB" id="EMD-3903"/>
<dbReference type="EMDB" id="EMD-39577"/>
<dbReference type="EMDB" id="EMD-39578"/>
<dbReference type="EMDB" id="EMD-39579"/>
<dbReference type="EMDB" id="EMD-39580"/>
<dbReference type="EMDB" id="EMD-39581"/>
<dbReference type="EMDB" id="EMD-4001"/>
<dbReference type="EMDB" id="EMD-40882"/>
<dbReference type="EMDB" id="EMD-41049"/>
<dbReference type="EMDB" id="EMD-41050"/>
<dbReference type="EMDB" id="EMD-4121"/>
<dbReference type="EMDB" id="EMD-4122"/>
<dbReference type="EMDB" id="EMD-4123"/>
<dbReference type="EMDB" id="EMD-4124"/>
<dbReference type="EMDB" id="EMD-4125"/>
<dbReference type="EMDB" id="EMD-4126"/>
<dbReference type="EMDB" id="EMD-42453"/>
<dbReference type="EMDB" id="EMD-42454"/>
<dbReference type="EMDB" id="EMD-42473"/>
<dbReference type="EMDB" id="EMD-42474"/>
<dbReference type="EMDB" id="EMD-42477"/>
<dbReference type="EMDB" id="EMD-42479"/>
<dbReference type="EMDB" id="EMD-42492"/>
<dbReference type="EMDB" id="EMD-42493"/>
<dbReference type="EMDB" id="EMD-42503"/>
<dbReference type="EMDB" id="EMD-42504"/>
<dbReference type="EMDB" id="EMD-43490"/>
<dbReference type="EMDB" id="EMD-43491"/>
<dbReference type="EMDB" id="EMD-4378"/>
<dbReference type="EMDB" id="EMD-4379"/>
<dbReference type="EMDB" id="EMD-4380"/>
<dbReference type="EMDB" id="EMD-4381"/>
<dbReference type="EMDB" id="EMD-4382"/>
<dbReference type="EMDB" id="EMD-4383"/>
<dbReference type="EMDB" id="EMD-43929"/>
<dbReference type="EMDB" id="EMD-43930"/>
<dbReference type="EMDB" id="EMD-4477"/>
<dbReference type="EMDB" id="EMD-4478"/>
<dbReference type="EMDB" id="EMD-45569"/>
<dbReference type="EMDB" id="EMD-45572"/>
<dbReference type="EMDB" id="EMD-45573"/>
<dbReference type="EMDB" id="EMD-45666"/>
<dbReference type="EMDB" id="EMD-4638"/>
<dbReference type="EMDB" id="EMD-46632"/>
<dbReference type="EMDB" id="EMD-47303"/>
<dbReference type="EMDB" id="EMD-50296"/>
<dbReference type="EMDB" id="EMD-51318"/>
<dbReference type="EMDB" id="EMD-51340"/>
<dbReference type="EMDB" id="EMD-51836"/>
<dbReference type="EMDB" id="EMD-51837"/>
<dbReference type="EMDB" id="EMD-51838"/>
<dbReference type="EMDB" id="EMD-51839"/>
<dbReference type="EMDB" id="EMD-51840"/>
<dbReference type="EMDB" id="EMD-51841"/>
<dbReference type="EMDB" id="EMD-51842"/>
<dbReference type="EMDB" id="EMD-51843"/>
<dbReference type="EMDB" id="EMD-51977"/>
<dbReference type="EMDB" id="EMD-51978"/>
<dbReference type="EMDB" id="EMD-51981"/>
<dbReference type="EMDB" id="EMD-6667"/>
<dbReference type="EMDB" id="EMD-7289"/>
<dbReference type="EMDB" id="EMD-7341"/>
<dbReference type="EMDB" id="EMD-8000"/>
<dbReference type="EMDB" id="EMD-8001"/>
<dbReference type="EMDB" id="EMD-8002"/>
<dbReference type="EMDB" id="EMD-8003"/>
<dbReference type="EMDB" id="EMD-8004"/>
<dbReference type="EMDB" id="EMD-8107"/>
<dbReference type="EMDB" id="EMD-8175"/>
<dbReference type="EMDB" id="EMD-8176"/>
<dbReference type="EMDB" id="EMD-8237"/>
<dbReference type="EMDB" id="EMD-8238"/>
<dbReference type="EMDB" id="EMD-8279"/>
<dbReference type="EMDB" id="EMD-8280"/>
<dbReference type="EMDB" id="EMD-8281"/>
<dbReference type="EMDB" id="EMD-8282"/>
<dbReference type="EMDB" id="EMD-8505"/>
<dbReference type="EMDB" id="EMD-8615"/>
<dbReference type="EMDB" id="EMD-8616"/>
<dbReference type="EMDB" id="EMD-8617"/>
<dbReference type="EMDB" id="EMD-8618"/>
<dbReference type="EMDB" id="EMD-8619"/>
<dbReference type="EMDB" id="EMD-8620"/>
<dbReference type="EMDB" id="EMD-8813"/>
<dbReference type="EMDB" id="EMD-8814"/>
<dbReference type="EMDB" id="EMD-8815"/>
<dbReference type="EMDB" id="EMD-8828"/>
<dbReference type="SMR" id="P61175"/>
<dbReference type="BioGRID" id="4261287">
    <property type="interactions" value="14"/>
</dbReference>
<dbReference type="BioGRID" id="852125">
    <property type="interactions" value="2"/>
</dbReference>
<dbReference type="ComplexPortal" id="CPX-3807">
    <property type="entry name" value="50S large ribosomal subunit"/>
</dbReference>
<dbReference type="DIP" id="DIP-35983N"/>
<dbReference type="FunCoup" id="P61175">
    <property type="interactions" value="950"/>
</dbReference>
<dbReference type="IntAct" id="P61175">
    <property type="interactions" value="142"/>
</dbReference>
<dbReference type="STRING" id="511145.b3315"/>
<dbReference type="jPOST" id="P61175"/>
<dbReference type="PaxDb" id="511145-b3315"/>
<dbReference type="EnsemblBacteria" id="AAC76340">
    <property type="protein sequence ID" value="AAC76340"/>
    <property type="gene ID" value="b3315"/>
</dbReference>
<dbReference type="GeneID" id="93778672"/>
<dbReference type="GeneID" id="947813"/>
<dbReference type="KEGG" id="ecj:JW3277"/>
<dbReference type="KEGG" id="eco:b3315"/>
<dbReference type="KEGG" id="ecoc:C3026_18015"/>
<dbReference type="PATRIC" id="fig|1411691.4.peg.3416"/>
<dbReference type="EchoBASE" id="EB0875"/>
<dbReference type="eggNOG" id="COG0091">
    <property type="taxonomic scope" value="Bacteria"/>
</dbReference>
<dbReference type="HOGENOM" id="CLU_083987_3_3_6"/>
<dbReference type="InParanoid" id="P61175"/>
<dbReference type="OMA" id="KRIQPRA"/>
<dbReference type="OrthoDB" id="9805969at2"/>
<dbReference type="PhylomeDB" id="P61175"/>
<dbReference type="BioCyc" id="EcoCyc:EG10882-MONOMER"/>
<dbReference type="BioCyc" id="MetaCyc:EG10882-MONOMER"/>
<dbReference type="EvolutionaryTrace" id="P61175"/>
<dbReference type="PRO" id="PR:P61175"/>
<dbReference type="Proteomes" id="UP000000625">
    <property type="component" value="Chromosome"/>
</dbReference>
<dbReference type="GO" id="GO:0005737">
    <property type="term" value="C:cytoplasm"/>
    <property type="evidence" value="ECO:0000314"/>
    <property type="project" value="ComplexPortal"/>
</dbReference>
<dbReference type="GO" id="GO:0005829">
    <property type="term" value="C:cytosol"/>
    <property type="evidence" value="ECO:0000314"/>
    <property type="project" value="EcoCyc"/>
</dbReference>
<dbReference type="GO" id="GO:0022625">
    <property type="term" value="C:cytosolic large ribosomal subunit"/>
    <property type="evidence" value="ECO:0000314"/>
    <property type="project" value="EcoCyc"/>
</dbReference>
<dbReference type="GO" id="GO:0015934">
    <property type="term" value="C:large ribosomal subunit"/>
    <property type="evidence" value="ECO:0000315"/>
    <property type="project" value="CAFA"/>
</dbReference>
<dbReference type="GO" id="GO:0070180">
    <property type="term" value="F:large ribosomal subunit rRNA binding"/>
    <property type="evidence" value="ECO:0000314"/>
    <property type="project" value="EcoCyc"/>
</dbReference>
<dbReference type="GO" id="GO:0003735">
    <property type="term" value="F:structural constituent of ribosome"/>
    <property type="evidence" value="ECO:0000318"/>
    <property type="project" value="GO_Central"/>
</dbReference>
<dbReference type="GO" id="GO:1902626">
    <property type="term" value="P:assembly of large subunit precursor of preribosome"/>
    <property type="evidence" value="ECO:0000315"/>
    <property type="project" value="EcoCyc"/>
</dbReference>
<dbReference type="GO" id="GO:0002181">
    <property type="term" value="P:cytoplasmic translation"/>
    <property type="evidence" value="ECO:0000303"/>
    <property type="project" value="ComplexPortal"/>
</dbReference>
<dbReference type="GO" id="GO:0042256">
    <property type="term" value="P:cytosolic ribosome assembly"/>
    <property type="evidence" value="ECO:0000315"/>
    <property type="project" value="EcoCyc"/>
</dbReference>
<dbReference type="GO" id="GO:0046677">
    <property type="term" value="P:response to antibiotic"/>
    <property type="evidence" value="ECO:0007669"/>
    <property type="project" value="UniProtKB-KW"/>
</dbReference>
<dbReference type="GO" id="GO:0042255">
    <property type="term" value="P:ribosome assembly"/>
    <property type="evidence" value="ECO:0000315"/>
    <property type="project" value="CAFA"/>
</dbReference>
<dbReference type="GO" id="GO:0006412">
    <property type="term" value="P:translation"/>
    <property type="evidence" value="ECO:0000315"/>
    <property type="project" value="EcoCyc"/>
</dbReference>
<dbReference type="CDD" id="cd00336">
    <property type="entry name" value="Ribosomal_L22"/>
    <property type="match status" value="1"/>
</dbReference>
<dbReference type="FunFam" id="3.90.470.10:FF:000001">
    <property type="entry name" value="50S ribosomal protein L22"/>
    <property type="match status" value="1"/>
</dbReference>
<dbReference type="Gene3D" id="3.90.470.10">
    <property type="entry name" value="Ribosomal protein L22/L17"/>
    <property type="match status" value="1"/>
</dbReference>
<dbReference type="HAMAP" id="MF_01331_B">
    <property type="entry name" value="Ribosomal_uL22_B"/>
    <property type="match status" value="1"/>
</dbReference>
<dbReference type="InterPro" id="IPR001063">
    <property type="entry name" value="Ribosomal_uL22"/>
</dbReference>
<dbReference type="InterPro" id="IPR005727">
    <property type="entry name" value="Ribosomal_uL22_bac/chlpt-type"/>
</dbReference>
<dbReference type="InterPro" id="IPR047867">
    <property type="entry name" value="Ribosomal_uL22_bac/org-type"/>
</dbReference>
<dbReference type="InterPro" id="IPR018260">
    <property type="entry name" value="Ribosomal_uL22_CS"/>
</dbReference>
<dbReference type="InterPro" id="IPR036394">
    <property type="entry name" value="Ribosomal_uL22_sf"/>
</dbReference>
<dbReference type="NCBIfam" id="TIGR01044">
    <property type="entry name" value="rplV_bact"/>
    <property type="match status" value="1"/>
</dbReference>
<dbReference type="PANTHER" id="PTHR13501">
    <property type="entry name" value="CHLOROPLAST 50S RIBOSOMAL PROTEIN L22-RELATED"/>
    <property type="match status" value="1"/>
</dbReference>
<dbReference type="PANTHER" id="PTHR13501:SF8">
    <property type="entry name" value="LARGE RIBOSOMAL SUBUNIT PROTEIN UL22M"/>
    <property type="match status" value="1"/>
</dbReference>
<dbReference type="Pfam" id="PF00237">
    <property type="entry name" value="Ribosomal_L22"/>
    <property type="match status" value="1"/>
</dbReference>
<dbReference type="SUPFAM" id="SSF54843">
    <property type="entry name" value="Ribosomal protein L22"/>
    <property type="match status" value="1"/>
</dbReference>
<dbReference type="PROSITE" id="PS00464">
    <property type="entry name" value="RIBOSOMAL_L22"/>
    <property type="match status" value="1"/>
</dbReference>
<comment type="function">
    <text evidence="5 13 16">This protein binds specifically to 23S rRNA; its binding is stimulated by other ribosomal proteins, e.g. uL4, bL17, and bL20. It is important during the early stages of 50S assembly. It makes multiple contacts with different domains of the 23S rRNA in the assembled 50S subunit and ribosome.</text>
</comment>
<comment type="function">
    <text evidence="3 5 12 13">The globular domain of the protein is one of the proteins that surrounds the polypeptide exit tunnel on the outside of the subunit, while an extended beta-hairpin is found that penetrates into the center of the 70S ribosome where it lines the wall of the exit tunnel. Removal of most of this hairpin (residues 85-95) does not prevent its incorporation into 70S ribosomes (PubMed:13130133, PubMed:34504068). Two of the hairpin residues (Gly-91 and Ala-93) seem to be involved in translation elongation arrest of the SecM protein, as their replacement by larger amino acids alleviates the arrest (PubMed:11893334). In the TnaC-stalled ribosome makes a salt bridge to L-Trp (PubMed:34403461, PubMed:34504068).</text>
</comment>
<comment type="subunit">
    <text evidence="1 2 4 6 7 8 9 10 11 12 13 14">Part of the 50S ribosomal subunit (PubMed:10094780, PubMed:11511371, PubMed:12809609, PubMed:16272117, PubMed:24844575, PubMed:25310980, PubMed:27906160, PubMed:27906161, PubMed:27934701, PubMed:34403461, PubMed:34504068, PubMed:7007072). In TnaC-stalled ribosomes forms part of the binding pocket for L-Trp with the leader peptide and uL4 (PubMed:34403461, PubMed:34504068).</text>
</comment>
<comment type="interaction">
    <interactant intactId="EBI-542255">
        <id>P61175</id>
    </interactant>
    <interactant intactId="EBI-548913">
        <id>P0A6K3</id>
        <label>def</label>
    </interactant>
    <organismsDiffer>false</organismsDiffer>
    <experiments>3</experiments>
</comment>
<comment type="interaction">
    <interactant intactId="EBI-542255">
        <id>P61175</id>
    </interactant>
    <interactant intactId="EBI-559367">
        <id>P17993</id>
        <label>ubiG</label>
    </interactant>
    <organismsDiffer>false</organismsDiffer>
    <experiments>3</experiments>
</comment>
<comment type="mass spectrometry"/>
<comment type="miscellaneous">
    <text>The wild-type allele (erythromycin sensitive) is dominant over the resistant allele, and is also dominant over the temperature-sensitive allele at both low and high temperatures.</text>
</comment>
<comment type="similarity">
    <text evidence="19">Belongs to the universal ribosomal protein uL22 family.</text>
</comment>
<reference key="1">
    <citation type="journal article" date="1980" name="FEBS Lett.">
        <title>Amino acid sequence of protein L22 from the large subunit of the Escherichia coli ribosome.</title>
        <authorList>
            <person name="Wittmann-Liebold B."/>
            <person name="Greuer B."/>
        </authorList>
    </citation>
    <scope>PROTEIN SEQUENCE</scope>
    <scope>SUBUNIT</scope>
</reference>
<reference key="2">
    <citation type="journal article" date="1985" name="Nucleic Acids Res.">
        <title>Structure of the Escherichia coli S10 ribosomal protein operon.</title>
        <authorList>
            <person name="Zurawski G."/>
            <person name="Zurawski S.M."/>
        </authorList>
    </citation>
    <scope>NUCLEOTIDE SEQUENCE [GENOMIC DNA]</scope>
</reference>
<reference key="3">
    <citation type="journal article" date="1997" name="Science">
        <title>The complete genome sequence of Escherichia coli K-12.</title>
        <authorList>
            <person name="Blattner F.R."/>
            <person name="Plunkett G. III"/>
            <person name="Bloch C.A."/>
            <person name="Perna N.T."/>
            <person name="Burland V."/>
            <person name="Riley M."/>
            <person name="Collado-Vides J."/>
            <person name="Glasner J.D."/>
            <person name="Rode C.K."/>
            <person name="Mayhew G.F."/>
            <person name="Gregor J."/>
            <person name="Davis N.W."/>
            <person name="Kirkpatrick H.A."/>
            <person name="Goeden M.A."/>
            <person name="Rose D.J."/>
            <person name="Mau B."/>
            <person name="Shao Y."/>
        </authorList>
    </citation>
    <scope>NUCLEOTIDE SEQUENCE [LARGE SCALE GENOMIC DNA]</scope>
    <source>
        <strain>K12 / MG1655 / ATCC 47076</strain>
    </source>
</reference>
<reference key="4">
    <citation type="journal article" date="2006" name="Mol. Syst. Biol.">
        <title>Highly accurate genome sequences of Escherichia coli K-12 strains MG1655 and W3110.</title>
        <authorList>
            <person name="Hayashi K."/>
            <person name="Morooka N."/>
            <person name="Yamamoto Y."/>
            <person name="Fujita K."/>
            <person name="Isono K."/>
            <person name="Choi S."/>
            <person name="Ohtsubo E."/>
            <person name="Baba T."/>
            <person name="Wanner B.L."/>
            <person name="Mori H."/>
            <person name="Horiuchi T."/>
        </authorList>
    </citation>
    <scope>NUCLEOTIDE SEQUENCE [LARGE SCALE GENOMIC DNA]</scope>
    <source>
        <strain>K12 / W3110 / ATCC 27325 / DSM 5911</strain>
    </source>
</reference>
<reference key="5">
    <citation type="journal article" date="2014" name="Curr. Opin. Struct. Biol.">
        <title>A new system for naming ribosomal proteins.</title>
        <authorList>
            <person name="Ban N."/>
            <person name="Beckmann R."/>
            <person name="Cate J.H.D."/>
            <person name="Dinman J.D."/>
            <person name="Dragon F."/>
            <person name="Ellis S.R."/>
            <person name="Lafontaine D.L.J."/>
            <person name="Lindahl L."/>
            <person name="Liljas A."/>
            <person name="Lipton J.M."/>
            <person name="McAlear M.A."/>
            <person name="Moore P.B."/>
            <person name="Noller H.F."/>
            <person name="Ortega J."/>
            <person name="Panse V.G."/>
            <person name="Ramakrishnan V."/>
            <person name="Spahn C.M.T."/>
            <person name="Steitz T.A."/>
            <person name="Tchorzewski M."/>
            <person name="Tollervey D."/>
            <person name="Warren A.J."/>
            <person name="Williamson J.R."/>
            <person name="Wilson D."/>
            <person name="Yonath A."/>
            <person name="Yusupov M."/>
        </authorList>
    </citation>
    <scope>NOMENCLATURE</scope>
</reference>
<reference key="6">
    <citation type="journal article" date="1973" name="Mol. Gen. Genet.">
        <title>Biochemical and genetic studies on two different types of erythromycin resistant mutants of Escherichia coli with altered ribosomal proteins.</title>
        <authorList>
            <person name="Wittmann H.G."/>
            <person name="Stoffler G."/>
            <person name="Apirion D."/>
            <person name="Rosen L."/>
            <person name="Tanaka K."/>
            <person name="Tamaki M."/>
            <person name="Takata R."/>
            <person name="Dekio S."/>
            <person name="Otaka E."/>
        </authorList>
    </citation>
    <scope>CHARACTERIZATION OF ERYTHROMYCIN-RESISTANT VARIANT N281</scope>
    <source>
        <strain>N281</strain>
    </source>
</reference>
<reference key="7">
    <citation type="journal article" date="1994" name="Genetica">
        <title>A temperature-sensitive mutant of Escherichia coli with an alteration in ribosomal protein L22.</title>
        <authorList>
            <person name="Burnette-Vick B."/>
            <person name="Champney W.S."/>
            <person name="Musich P.R."/>
        </authorList>
    </citation>
    <scope>TEMPERATURE-SENSITIVE VARIANT</scope>
    <source>
        <strain>SK1048</strain>
    </source>
</reference>
<reference key="8">
    <citation type="journal article" date="1994" name="J. Bacteriol.">
        <title>Ribosomal protein gene sequence changes in erythromycin-resistant mutants of Escherichia coli.</title>
        <authorList>
            <person name="Chittum H.S."/>
            <person name="Champney W.S."/>
        </authorList>
    </citation>
    <scope>IDENTIFICATION OF CHANGES IN ERYTHROMYCIN-RESISTANT VARIANT N281</scope>
    <source>
        <strain>N281</strain>
    </source>
</reference>
<reference key="9">
    <citation type="journal article" date="1995" name="Curr. Microbiol.">
        <title>Erythromycin inhibits the assembly of the large ribosomal subunit in growing Escherichia coli cells.</title>
        <authorList>
            <person name="Chittum H.S."/>
            <person name="Champney W.S."/>
        </authorList>
    </citation>
    <scope>ERYTHROMYCIN AND RIBOSOME ASSEMBLY</scope>
    <source>
        <strain>N281</strain>
        <strain>SK901</strain>
    </source>
</reference>
<reference key="10">
    <citation type="journal article" date="2002" name="Cell">
        <title>The ribosomal exit tunnel functions as a discriminating gate.</title>
        <authorList>
            <person name="Nakatogawa H."/>
            <person name="Ito K."/>
        </authorList>
    </citation>
    <scope>MUTAGENESIS OF GLY-91 AND ALA-93</scope>
</reference>
<reference key="11">
    <citation type="journal article" date="2003" name="RNA">
        <title>The extended loops of ribosomal proteins L4 and L22 are not required for ribosome assembly or L4-mediated autogenous control.</title>
        <authorList>
            <person name="Zengel J.M."/>
            <person name="Jerauld A."/>
            <person name="Walker A."/>
            <person name="Wahl M.C."/>
            <person name="Lindahl L."/>
        </authorList>
    </citation>
    <scope>REQUIREMENTS FOR RIBOSOME ASSEMBLY</scope>
    <scope>MUTAGENESIS OF 82-MET--ARG-99 AND 85-ILE--ARG-95</scope>
    <source>
        <strain>K12 / LL308</strain>
    </source>
</reference>
<reference key="12">
    <citation type="journal article" date="1999" name="Anal. Biochem.">
        <title>Observation of Escherichia coli ribosomal proteins and their posttranslational modifications by mass spectrometry.</title>
        <authorList>
            <person name="Arnold R.J."/>
            <person name="Reilly J.P."/>
        </authorList>
    </citation>
    <scope>MASS SPECTROMETRY</scope>
    <scope>SUBUNIT</scope>
    <source>
        <strain>K12 / ATCC 25404 / DSM 5698 / NCIMB 11290</strain>
    </source>
</reference>
<reference key="13">
    <citation type="journal article" date="2003" name="Cell">
        <title>Study of the structural dynamics of the E. coli 70S ribosome using real-space refinement.</title>
        <authorList>
            <person name="Gao H."/>
            <person name="Sengupta J."/>
            <person name="Valle M."/>
            <person name="Korostelev A."/>
            <person name="Eswar N."/>
            <person name="Stagg S.M."/>
            <person name="Van Roey P."/>
            <person name="Agrawal R.K."/>
            <person name="Harvey S.C."/>
            <person name="Sali A."/>
            <person name="Chapman M.S."/>
            <person name="Frank J."/>
        </authorList>
    </citation>
    <scope>STRUCTURE BY ELECTRON MICROSCOPY (11.50 ANGSTROMS)</scope>
    <scope>SUBUNIT</scope>
    <source>
        <strain>MRE-600</strain>
    </source>
</reference>
<reference key="14">
    <citation type="journal article" date="2001" name="Mol. Cell">
        <title>The polypeptide tunnel system in the ribosome and its gating in erythromycin resistance mutants of L4 and L22.</title>
        <authorList>
            <person name="Gabashvili I.S."/>
            <person name="Gregory S.T."/>
            <person name="Valle M."/>
            <person name="Grassucci R."/>
            <person name="Worbs M."/>
            <person name="Wahl M.C."/>
            <person name="Dahlberg A.E."/>
            <person name="Frank J."/>
        </authorList>
    </citation>
    <scope>STRUCTURE BY ELECTRON MICROSCOPY (17.1 ANGSTROMS)</scope>
    <scope>EFFECT OF THE ERYTHROMYCIN-RESISTANT VARIANT ON THE POLYPEPTIDE EXIT TUNNEL</scope>
    <scope>SUBUNIT</scope>
    <source>
        <strain>N281</strain>
    </source>
</reference>
<reference key="15">
    <citation type="journal article" date="2005" name="Science">
        <title>Structures of the bacterial ribosome at 3.5 A resolution.</title>
        <authorList>
            <person name="Schuwirth B.S."/>
            <person name="Borovinskaya M.A."/>
            <person name="Hau C.W."/>
            <person name="Zhang W."/>
            <person name="Vila-Sanjurjo A."/>
            <person name="Holton J.M."/>
            <person name="Cate J.H.D."/>
        </authorList>
    </citation>
    <scope>X-RAY CRYSTALLOGRAPHY (3.46 ANGSTROMS) OF 2 DIFFERENT RIBOSOME STRUCTURES</scope>
    <scope>SUBUNIT</scope>
    <source>
        <strain>MRE-600</strain>
    </source>
</reference>
<reference key="16">
    <citation type="journal article" date="2014" name="Cell Rep.">
        <title>Molecular basis for the ribosome functioning as an L-tryptophan sensor.</title>
        <authorList>
            <person name="Bischoff L."/>
            <person name="Berninghausen O."/>
            <person name="Beckmann R."/>
        </authorList>
    </citation>
    <scope>STRUCTURE BY ELECTRON MICROSCOPY (3.80 ANGSTROMS) OF TNAC-STALLED 50S RIBOSOMAL SUBUNIT</scope>
    <scope>SUBUNIT</scope>
    <source>
        <strain>K12 / A19 / KC6</strain>
    </source>
</reference>
<reference key="17">
    <citation type="journal article" date="2014" name="PLoS Biol.">
        <title>Structural and functional insights into the mode of action of a universally conserved Obg GTPase.</title>
        <authorList>
            <person name="Feng B."/>
            <person name="Mandava C.S."/>
            <person name="Guo Q."/>
            <person name="Wang J."/>
            <person name="Cao W."/>
            <person name="Li N."/>
            <person name="Zhang Y."/>
            <person name="Zhang Y."/>
            <person name="Wang Z."/>
            <person name="Wu J."/>
            <person name="Sanyal S."/>
            <person name="Lei J."/>
            <person name="Gao N."/>
        </authorList>
    </citation>
    <scope>STRUCTURE BY ELECTRON MICROSCOPY (5.5 ANGSTROMS) OF 50S RIBOSOMAL SUBUNIT IN COMPLEX WITH OBGE AND GMP-PNP</scope>
    <scope>SUBUNIT</scope>
</reference>
<reference key="18">
    <citation type="journal article" date="2017" name="Nature">
        <title>Mechanistic insights into the alternative translation termination by ArfA and RF2.</title>
        <authorList>
            <person name="Ma C."/>
            <person name="Kurita D."/>
            <person name="Li N."/>
            <person name="Chen Y."/>
            <person name="Himeno H."/>
            <person name="Gao N."/>
        </authorList>
    </citation>
    <scope>STRUCTURE BY ELECTRON MICROSCOPY (3.0 ANGSTROMS) OF 70S RIBOSOME IN COMPLEX WITH ARFA AND RF2</scope>
    <scope>SUBUNIT</scope>
</reference>
<reference key="19">
    <citation type="journal article" date="2017" name="Nature">
        <title>Structural basis for ArfA-RF2-mediated translation termination on mRNAs lacking stop codons.</title>
        <authorList>
            <person name="Huter P."/>
            <person name="Mueller C."/>
            <person name="Beckert B."/>
            <person name="Arenz S."/>
            <person name="Berninghausen O."/>
            <person name="Beckmann R."/>
            <person name="Wilson D.N."/>
        </authorList>
    </citation>
    <scope>STRUCTURE BY ELECTRON MICROSCOPY (3.1 ANGSTROMS) OF 70S RIBOSOME IN COMPLEX WITH ARFA AND RF2</scope>
    <scope>SUBUNIT</scope>
</reference>
<reference key="20">
    <citation type="journal article" date="2016" name="Science">
        <title>Translational termination without a stop codon.</title>
        <authorList>
            <person name="James N.R."/>
            <person name="Brown A."/>
            <person name="Gordiyenko Y."/>
            <person name="Ramakrishnan V."/>
        </authorList>
    </citation>
    <scope>STRUCTURE BY ELECTRON MICROSCOPY (2.97 ANGSTROMS) OF 70S RIBOSOME IN COMPLEX WITH ARFA AND RF2</scope>
    <scope>SUBUNIT</scope>
</reference>
<reference key="21">
    <citation type="journal article" date="2017" name="Nature">
        <title>Structural basis of co-translational quality control by ArfA and RF2 bound to ribosome.</title>
        <authorList>
            <person name="Zeng F."/>
            <person name="Chen Y."/>
            <person name="Remis J."/>
            <person name="Shekhar M."/>
            <person name="Phillips J.C."/>
            <person name="Tajkhorshid E."/>
            <person name="Jin H."/>
        </authorList>
    </citation>
    <scope>STRUCTURE BY ELECTRON MICROSCOPY (3.52 ANGSTROMS) OF 70S RIBOSOME IN COMPLEX WITH ARFA AND RF2</scope>
    <scope>SUBUNIT</scope>
</reference>
<reference evidence="20 21 22" key="22">
    <citation type="journal article" date="2021" name="Nat. Commun.">
        <title>Structural basis for the tryptophan sensitivity of TnaC-mediated ribosome stalling.</title>
        <authorList>
            <person name="van der Stel A.X."/>
            <person name="Gordon E.R."/>
            <person name="Sengupta A."/>
            <person name="Martinez A.K."/>
            <person name="Klepacki D."/>
            <person name="Perry T.N."/>
            <person name="Herrero Del Valle A."/>
            <person name="Vazquez-Laslop N."/>
            <person name="Sachs M.S."/>
            <person name="Cruz-Vera L.R."/>
            <person name="Innis C.A."/>
        </authorList>
    </citation>
    <scope>STRUCTURE BY ELECTRON MICROSCOPY (2.40 ANGSTROMS) IN TNAC-STALLED RIBOSOME WITH L-TRYPTOPHAN WITH OR WITHOUT RELEASE FACTOR 2</scope>
    <scope>SUBUNIT RRNA-BINDING</scope>
    <source>
        <strain>K12 / MG1655 / ATCC 47076</strain>
    </source>
</reference>
<reference evidence="23 24 25" key="23">
    <citation type="journal article" date="2021" name="Nucleic Acids Res.">
        <title>Structural basis of L-tryptophan-dependent inhibition of release factor 2 by the TnaC arrest peptide.</title>
        <authorList>
            <person name="Su T."/>
            <person name="Kudva R."/>
            <person name="Becker T."/>
            <person name="Buschauer R."/>
            <person name="Komar T."/>
            <person name="Berninghausen O."/>
            <person name="von Heijne G."/>
            <person name="Cheng J."/>
            <person name="Beckmann R."/>
        </authorList>
    </citation>
    <scope>STRUCTURE BY ELECTRON MICROSCOPY (3.50 ANGSTROMS) IN TNAC-STALLED RIBOSOME WITH AND WITHOUT L-TRYPTOPHAN AND RELEASE FACTOR 2</scope>
    <source>
        <strain>K12</strain>
    </source>
</reference>